<accession>Q7Z699</accession>
<accession>B2RPJ8</accession>
<accession>Q05D53</accession>
<accession>Q8N256</accession>
<name>SPRE1_HUMAN</name>
<organism>
    <name type="scientific">Homo sapiens</name>
    <name type="common">Human</name>
    <dbReference type="NCBI Taxonomy" id="9606"/>
    <lineage>
        <taxon>Eukaryota</taxon>
        <taxon>Metazoa</taxon>
        <taxon>Chordata</taxon>
        <taxon>Craniata</taxon>
        <taxon>Vertebrata</taxon>
        <taxon>Euteleostomi</taxon>
        <taxon>Mammalia</taxon>
        <taxon>Eutheria</taxon>
        <taxon>Euarchontoglires</taxon>
        <taxon>Primates</taxon>
        <taxon>Haplorrhini</taxon>
        <taxon>Catarrhini</taxon>
        <taxon>Hominidae</taxon>
        <taxon>Homo</taxon>
    </lineage>
</organism>
<feature type="initiator methionine" description="Removed" evidence="17">
    <location>
        <position position="1"/>
    </location>
</feature>
<feature type="chain" id="PRO_0000076907" description="Sprouty-related, EVH1 domain-containing protein 1">
    <location>
        <begin position="2"/>
        <end position="444"/>
    </location>
</feature>
<feature type="domain" description="WH1" evidence="2">
    <location>
        <begin position="6"/>
        <end position="123"/>
    </location>
</feature>
<feature type="domain" description="KBD" evidence="4">
    <location>
        <begin position="233"/>
        <end position="285"/>
    </location>
</feature>
<feature type="domain" description="SPR" evidence="3">
    <location>
        <begin position="334"/>
        <end position="442"/>
    </location>
</feature>
<feature type="region of interest" description="Disordered" evidence="5">
    <location>
        <begin position="123"/>
        <end position="151"/>
    </location>
</feature>
<feature type="region of interest" description="Required for interaction with TESK1" evidence="1">
    <location>
        <begin position="333"/>
        <end position="444"/>
    </location>
</feature>
<feature type="compositionally biased region" description="Acidic residues" evidence="5">
    <location>
        <begin position="135"/>
        <end position="147"/>
    </location>
</feature>
<feature type="modified residue" description="N-acetylserine" evidence="17">
    <location>
        <position position="2"/>
    </location>
</feature>
<feature type="modified residue" description="N6-methyllysine" evidence="19">
    <location>
        <position position="224"/>
    </location>
</feature>
<feature type="modified residue" description="Phosphoserine" evidence="18">
    <location>
        <position position="238"/>
    </location>
</feature>
<feature type="modified residue" description="Phosphoserine" evidence="18">
    <location>
        <position position="308"/>
    </location>
</feature>
<feature type="sequence variant" id="VAR_064827" description="In LGSS." evidence="14">
    <original>W</original>
    <variation>C</variation>
    <location>
        <position position="31"/>
    </location>
</feature>
<feature type="sequence variant" id="VAR_064828" description="In LGSS; dbSNP:rs121434318." evidence="12 13">
    <original>V</original>
    <variation>D</variation>
    <location>
        <position position="44"/>
    </location>
</feature>
<feature type="sequence conflict" description="In Ref. 1; AAP59414." evidence="16" ref="1">
    <original>AT</original>
    <variation>GL</variation>
    <location>
        <begin position="6"/>
        <end position="7"/>
    </location>
</feature>
<feature type="strand" evidence="20">
    <location>
        <begin position="13"/>
        <end position="24"/>
    </location>
</feature>
<feature type="strand" evidence="20">
    <location>
        <begin position="26"/>
        <end position="29"/>
    </location>
</feature>
<feature type="strand" evidence="20">
    <location>
        <begin position="31"/>
        <end position="37"/>
    </location>
</feature>
<feature type="strand" evidence="20">
    <location>
        <begin position="40"/>
        <end position="51"/>
    </location>
</feature>
<feature type="strand" evidence="20">
    <location>
        <begin position="54"/>
        <end position="64"/>
    </location>
</feature>
<feature type="turn" evidence="20">
    <location>
        <begin position="65"/>
        <end position="67"/>
    </location>
</feature>
<feature type="strand" evidence="20">
    <location>
        <begin position="70"/>
        <end position="75"/>
    </location>
</feature>
<feature type="strand" evidence="20">
    <location>
        <begin position="81"/>
        <end position="86"/>
    </location>
</feature>
<feature type="strand" evidence="20">
    <location>
        <begin position="89"/>
        <end position="94"/>
    </location>
</feature>
<feature type="strand" evidence="20">
    <location>
        <begin position="97"/>
        <end position="105"/>
    </location>
</feature>
<feature type="helix" evidence="20">
    <location>
        <begin position="106"/>
        <end position="121"/>
    </location>
</feature>
<feature type="helix" evidence="20">
    <location>
        <begin position="122"/>
        <end position="124"/>
    </location>
</feature>
<dbReference type="EMBL" id="AY299089">
    <property type="protein sequence ID" value="AAP59414.1"/>
    <property type="molecule type" value="mRNA"/>
</dbReference>
<dbReference type="EMBL" id="AK091222">
    <property type="protein sequence ID" value="BAC03614.1"/>
    <property type="molecule type" value="mRNA"/>
</dbReference>
<dbReference type="EMBL" id="CH471125">
    <property type="protein sequence ID" value="EAW92368.1"/>
    <property type="molecule type" value="Genomic_DNA"/>
</dbReference>
<dbReference type="EMBL" id="BC018015">
    <property type="protein sequence ID" value="AAH18015.1"/>
    <property type="status" value="ALT_SEQ"/>
    <property type="molecule type" value="mRNA"/>
</dbReference>
<dbReference type="EMBL" id="BC137480">
    <property type="protein sequence ID" value="AAI37481.1"/>
    <property type="molecule type" value="mRNA"/>
</dbReference>
<dbReference type="EMBL" id="BC137481">
    <property type="protein sequence ID" value="AAI37482.1"/>
    <property type="molecule type" value="mRNA"/>
</dbReference>
<dbReference type="CCDS" id="CCDS32193.1"/>
<dbReference type="RefSeq" id="NP_689807.1">
    <property type="nucleotide sequence ID" value="NM_152594.3"/>
</dbReference>
<dbReference type="PDB" id="3SYX">
    <property type="method" value="X-ray"/>
    <property type="resolution" value="2.45 A"/>
    <property type="chains" value="A=13-131"/>
</dbReference>
<dbReference type="PDB" id="6V65">
    <property type="method" value="X-ray"/>
    <property type="resolution" value="2.76 A"/>
    <property type="chains" value="A=13-125"/>
</dbReference>
<dbReference type="PDB" id="6V6F">
    <property type="method" value="X-ray"/>
    <property type="resolution" value="2.54 A"/>
    <property type="chains" value="A=13-125"/>
</dbReference>
<dbReference type="PDBsum" id="3SYX"/>
<dbReference type="PDBsum" id="6V65"/>
<dbReference type="PDBsum" id="6V6F"/>
<dbReference type="SMR" id="Q7Z699"/>
<dbReference type="BioGRID" id="127800">
    <property type="interactions" value="71"/>
</dbReference>
<dbReference type="FunCoup" id="Q7Z699">
    <property type="interactions" value="2946"/>
</dbReference>
<dbReference type="IntAct" id="Q7Z699">
    <property type="interactions" value="457"/>
</dbReference>
<dbReference type="MINT" id="Q7Z699"/>
<dbReference type="STRING" id="9606.ENSP00000299084"/>
<dbReference type="GlyGen" id="Q7Z699">
    <property type="glycosylation" value="2 sites, 1 O-linked glycan (2 sites)"/>
</dbReference>
<dbReference type="iPTMnet" id="Q7Z699"/>
<dbReference type="PhosphoSitePlus" id="Q7Z699"/>
<dbReference type="SwissPalm" id="Q7Z699"/>
<dbReference type="BioMuta" id="SPRED1"/>
<dbReference type="DMDM" id="57013078"/>
<dbReference type="CPTAC" id="CPTAC-1563"/>
<dbReference type="jPOST" id="Q7Z699"/>
<dbReference type="MassIVE" id="Q7Z699"/>
<dbReference type="PaxDb" id="9606-ENSP00000299084"/>
<dbReference type="PeptideAtlas" id="Q7Z699"/>
<dbReference type="ProteomicsDB" id="69386"/>
<dbReference type="Pumba" id="Q7Z699"/>
<dbReference type="Antibodypedia" id="22853">
    <property type="antibodies" value="370 antibodies from 32 providers"/>
</dbReference>
<dbReference type="DNASU" id="161742"/>
<dbReference type="Ensembl" id="ENST00000299084.9">
    <property type="protein sequence ID" value="ENSP00000299084.4"/>
    <property type="gene ID" value="ENSG00000166068.13"/>
</dbReference>
<dbReference type="GeneID" id="161742"/>
<dbReference type="KEGG" id="hsa:161742"/>
<dbReference type="MANE-Select" id="ENST00000299084.9">
    <property type="protein sequence ID" value="ENSP00000299084.4"/>
    <property type="RefSeq nucleotide sequence ID" value="NM_152594.3"/>
    <property type="RefSeq protein sequence ID" value="NP_689807.1"/>
</dbReference>
<dbReference type="UCSC" id="uc001zka.5">
    <property type="organism name" value="human"/>
</dbReference>
<dbReference type="AGR" id="HGNC:20249"/>
<dbReference type="CTD" id="161742"/>
<dbReference type="DisGeNET" id="161742"/>
<dbReference type="GeneCards" id="SPRED1"/>
<dbReference type="GeneReviews" id="SPRED1"/>
<dbReference type="HGNC" id="HGNC:20249">
    <property type="gene designation" value="SPRED1"/>
</dbReference>
<dbReference type="HPA" id="ENSG00000166068">
    <property type="expression patterns" value="Low tissue specificity"/>
</dbReference>
<dbReference type="MalaCards" id="SPRED1"/>
<dbReference type="MIM" id="609291">
    <property type="type" value="gene"/>
</dbReference>
<dbReference type="MIM" id="611431">
    <property type="type" value="phenotype"/>
</dbReference>
<dbReference type="neXtProt" id="NX_Q7Z699"/>
<dbReference type="OpenTargets" id="ENSG00000166068"/>
<dbReference type="Orphanet" id="137605">
    <property type="disease" value="Legius syndrome"/>
</dbReference>
<dbReference type="PharmGKB" id="PA134897382"/>
<dbReference type="VEuPathDB" id="HostDB:ENSG00000166068"/>
<dbReference type="eggNOG" id="KOG4590">
    <property type="taxonomic scope" value="Eukaryota"/>
</dbReference>
<dbReference type="GeneTree" id="ENSGT00940000159180"/>
<dbReference type="HOGENOM" id="CLU_038867_1_1_1"/>
<dbReference type="InParanoid" id="Q7Z699"/>
<dbReference type="OMA" id="KKPDYLY"/>
<dbReference type="OrthoDB" id="5786858at2759"/>
<dbReference type="PAN-GO" id="Q7Z699">
    <property type="GO annotations" value="2 GO annotations based on evolutionary models"/>
</dbReference>
<dbReference type="PhylomeDB" id="Q7Z699"/>
<dbReference type="TreeFam" id="TF321411"/>
<dbReference type="PathwayCommons" id="Q7Z699"/>
<dbReference type="Reactome" id="R-HSA-5658442">
    <property type="pathway name" value="Regulation of RAS by GAPs"/>
</dbReference>
<dbReference type="Reactome" id="R-HSA-5658623">
    <property type="pathway name" value="FGFRL1 modulation of FGFR1 signaling"/>
</dbReference>
<dbReference type="Reactome" id="R-HSA-6802953">
    <property type="pathway name" value="RAS signaling downstream of NF1 loss-of-function variants"/>
</dbReference>
<dbReference type="SignaLink" id="Q7Z699"/>
<dbReference type="SIGNOR" id="Q7Z699"/>
<dbReference type="BioGRID-ORCS" id="161742">
    <property type="hits" value="32 hits in 1183 CRISPR screens"/>
</dbReference>
<dbReference type="ChiTaRS" id="SPRED1">
    <property type="organism name" value="human"/>
</dbReference>
<dbReference type="EvolutionaryTrace" id="Q7Z699"/>
<dbReference type="GeneWiki" id="SPRED1"/>
<dbReference type="GenomeRNAi" id="161742"/>
<dbReference type="Pharos" id="Q7Z699">
    <property type="development level" value="Tbio"/>
</dbReference>
<dbReference type="PRO" id="PR:Q7Z699"/>
<dbReference type="Proteomes" id="UP000005640">
    <property type="component" value="Chromosome 15"/>
</dbReference>
<dbReference type="RNAct" id="Q7Z699">
    <property type="molecule type" value="protein"/>
</dbReference>
<dbReference type="Bgee" id="ENSG00000166068">
    <property type="expression patterns" value="Expressed in ventricular zone and 177 other cell types or tissues"/>
</dbReference>
<dbReference type="ExpressionAtlas" id="Q7Z699">
    <property type="expression patterns" value="baseline and differential"/>
</dbReference>
<dbReference type="GO" id="GO:0005901">
    <property type="term" value="C:caveola"/>
    <property type="evidence" value="ECO:0007669"/>
    <property type="project" value="UniProtKB-SubCell"/>
</dbReference>
<dbReference type="GO" id="GO:0005829">
    <property type="term" value="C:cytosol"/>
    <property type="evidence" value="ECO:0000314"/>
    <property type="project" value="ARUK-UCL"/>
</dbReference>
<dbReference type="GO" id="GO:0005654">
    <property type="term" value="C:nucleoplasm"/>
    <property type="evidence" value="ECO:0000314"/>
    <property type="project" value="HPA"/>
</dbReference>
<dbReference type="GO" id="GO:0005886">
    <property type="term" value="C:plasma membrane"/>
    <property type="evidence" value="ECO:0000250"/>
    <property type="project" value="UniProtKB"/>
</dbReference>
<dbReference type="GO" id="GO:0019902">
    <property type="term" value="F:phosphatase binding"/>
    <property type="evidence" value="ECO:0000314"/>
    <property type="project" value="UniProtKB"/>
</dbReference>
<dbReference type="GO" id="GO:0019901">
    <property type="term" value="F:protein kinase binding"/>
    <property type="evidence" value="ECO:0000353"/>
    <property type="project" value="ARUK-UCL"/>
</dbReference>
<dbReference type="GO" id="GO:0030291">
    <property type="term" value="F:protein serine/threonine kinase inhibitor activity"/>
    <property type="evidence" value="ECO:0000314"/>
    <property type="project" value="ARUK-UCL"/>
</dbReference>
<dbReference type="GO" id="GO:0005173">
    <property type="term" value="F:stem cell factor receptor binding"/>
    <property type="evidence" value="ECO:0000250"/>
    <property type="project" value="UniProtKB"/>
</dbReference>
<dbReference type="GO" id="GO:0016525">
    <property type="term" value="P:negative regulation of angiogenesis"/>
    <property type="evidence" value="ECO:0000315"/>
    <property type="project" value="BHF-UCL"/>
</dbReference>
<dbReference type="GO" id="GO:0090051">
    <property type="term" value="P:negative regulation of cell migration involved in sprouting angiogenesis"/>
    <property type="evidence" value="ECO:0007669"/>
    <property type="project" value="Ensembl"/>
</dbReference>
<dbReference type="GO" id="GO:0010719">
    <property type="term" value="P:negative regulation of epithelial to mesenchymal transition"/>
    <property type="evidence" value="ECO:0000250"/>
    <property type="project" value="UniProtKB"/>
</dbReference>
<dbReference type="GO" id="GO:0070373">
    <property type="term" value="P:negative regulation of ERK1 and ERK2 cascade"/>
    <property type="evidence" value="ECO:0000250"/>
    <property type="project" value="UniProtKB"/>
</dbReference>
<dbReference type="GO" id="GO:1902532">
    <property type="term" value="P:negative regulation of intracellular signal transduction"/>
    <property type="evidence" value="ECO:0000315"/>
    <property type="project" value="BHF-UCL"/>
</dbReference>
<dbReference type="GO" id="GO:1902747">
    <property type="term" value="P:negative regulation of lens fiber cell differentiation"/>
    <property type="evidence" value="ECO:0000250"/>
    <property type="project" value="UniProtKB"/>
</dbReference>
<dbReference type="GO" id="GO:0043409">
    <property type="term" value="P:negative regulation of MAPK cascade"/>
    <property type="evidence" value="ECO:0000315"/>
    <property type="project" value="BHF-UCL"/>
</dbReference>
<dbReference type="GO" id="GO:0030512">
    <property type="term" value="P:negative regulation of transforming growth factor beta receptor signaling pathway"/>
    <property type="evidence" value="ECO:0000250"/>
    <property type="project" value="UniProtKB"/>
</dbReference>
<dbReference type="GO" id="GO:0043517">
    <property type="term" value="P:positive regulation of DNA damage response, signal transduction by p53 class mediator"/>
    <property type="evidence" value="ECO:0000250"/>
    <property type="project" value="BHF-UCL"/>
</dbReference>
<dbReference type="GO" id="GO:0043408">
    <property type="term" value="P:regulation of MAPK cascade"/>
    <property type="evidence" value="ECO:0000304"/>
    <property type="project" value="ARUK-UCL"/>
</dbReference>
<dbReference type="GO" id="GO:0060979">
    <property type="term" value="P:vasculogenesis involved in coronary vascular morphogenesis"/>
    <property type="evidence" value="ECO:0000315"/>
    <property type="project" value="BHF-UCL"/>
</dbReference>
<dbReference type="CDD" id="cd10574">
    <property type="entry name" value="EVH1_SPRED-like"/>
    <property type="match status" value="1"/>
</dbReference>
<dbReference type="FunFam" id="2.30.29.30:FF:000052">
    <property type="entry name" value="Sprouty-related, EVH1 domain containing 2"/>
    <property type="match status" value="1"/>
</dbReference>
<dbReference type="Gene3D" id="2.30.29.30">
    <property type="entry name" value="Pleckstrin-homology domain (PH domain)/Phosphotyrosine-binding domain (PTB)"/>
    <property type="match status" value="1"/>
</dbReference>
<dbReference type="InterPro" id="IPR023337">
    <property type="entry name" value="KBD"/>
</dbReference>
<dbReference type="InterPro" id="IPR011993">
    <property type="entry name" value="PH-like_dom_sf"/>
</dbReference>
<dbReference type="InterPro" id="IPR041937">
    <property type="entry name" value="SPRE_EVH1"/>
</dbReference>
<dbReference type="InterPro" id="IPR007875">
    <property type="entry name" value="Sprouty"/>
</dbReference>
<dbReference type="InterPro" id="IPR000697">
    <property type="entry name" value="WH1/EVH1_dom"/>
</dbReference>
<dbReference type="PANTHER" id="PTHR11202:SF18">
    <property type="entry name" value="SPROUTY-RELATED, EVH1 DOMAIN-CONTAINING PROTEIN 1"/>
    <property type="match status" value="1"/>
</dbReference>
<dbReference type="PANTHER" id="PTHR11202">
    <property type="entry name" value="SPROUTY-RELATED, EVH1 DOMAIN-CONTAINING PROTEIN FAMILY MEMBER"/>
    <property type="match status" value="1"/>
</dbReference>
<dbReference type="Pfam" id="PF05210">
    <property type="entry name" value="Sprouty"/>
    <property type="match status" value="1"/>
</dbReference>
<dbReference type="Pfam" id="PF00568">
    <property type="entry name" value="WH1"/>
    <property type="match status" value="1"/>
</dbReference>
<dbReference type="SMART" id="SM00461">
    <property type="entry name" value="WH1"/>
    <property type="match status" value="1"/>
</dbReference>
<dbReference type="SUPFAM" id="SSF50729">
    <property type="entry name" value="PH domain-like"/>
    <property type="match status" value="1"/>
</dbReference>
<dbReference type="PROSITE" id="PS51488">
    <property type="entry name" value="KBD"/>
    <property type="match status" value="1"/>
</dbReference>
<dbReference type="PROSITE" id="PS51227">
    <property type="entry name" value="SPR"/>
    <property type="match status" value="1"/>
</dbReference>
<dbReference type="PROSITE" id="PS50229">
    <property type="entry name" value="WH1"/>
    <property type="match status" value="1"/>
</dbReference>
<sequence>MSEETATSDNDNSYARVRAVVMTRDDSSGGWLPLGGSGLSSVTVFKVPHQEENGCADFFIRGERLRDKMVVLECMLKKDLIYNKVTPTFHHWKIDDKKFGLTFQSPADARAFDRGIRRAIEDISQGCPESKNEAEGADDLQANEEDSSSSLVKDHLFQQETVVTSEPYRSSNIRPSPFEDLNARRVYMQSQANQITFGQPGLDIQSRSMEYVQRQISKECGSLKSQNRVPLKSIRHVSFQDEDEIVRINPRDILIRRYADYRHPDMWKNDLERDDADSSIQFSKPDSKKSDYLYSCGDETKLSSPKDSVVFKTQPSSLKIKKSKRRKEDGERSRCVYCQERFNHEENVRGKCQDAPDPIKRCIYQVSCMLCAESMLYHCMSDSEGDFSDPCSCDTSDDKFCLRWLALVALSFIVPCMCCYVPLRMCHRCGEACGCCGGKHKAAG</sequence>
<protein>
    <recommendedName>
        <fullName>Sprouty-related, EVH1 domain-containing protein 1</fullName>
        <shortName>Spred-1</shortName>
        <shortName>hSpred1</shortName>
    </recommendedName>
</protein>
<evidence type="ECO:0000250" key="1">
    <source>
        <dbReference type="UniProtKB" id="Q924S8"/>
    </source>
</evidence>
<evidence type="ECO:0000255" key="2">
    <source>
        <dbReference type="PROSITE-ProRule" id="PRU00410"/>
    </source>
</evidence>
<evidence type="ECO:0000255" key="3">
    <source>
        <dbReference type="PROSITE-ProRule" id="PRU00572"/>
    </source>
</evidence>
<evidence type="ECO:0000255" key="4">
    <source>
        <dbReference type="PROSITE-ProRule" id="PRU00821"/>
    </source>
</evidence>
<evidence type="ECO:0000256" key="5">
    <source>
        <dbReference type="SAM" id="MobiDB-lite"/>
    </source>
</evidence>
<evidence type="ECO:0000269" key="6">
    <source>
    </source>
</evidence>
<evidence type="ECO:0000269" key="7">
    <source>
    </source>
</evidence>
<evidence type="ECO:0000269" key="8">
    <source>
    </source>
</evidence>
<evidence type="ECO:0000269" key="9">
    <source>
    </source>
</evidence>
<evidence type="ECO:0000269" key="10">
    <source>
    </source>
</evidence>
<evidence type="ECO:0000269" key="11">
    <source>
    </source>
</evidence>
<evidence type="ECO:0000269" key="12">
    <source>
    </source>
</evidence>
<evidence type="ECO:0000269" key="13">
    <source>
    </source>
</evidence>
<evidence type="ECO:0000269" key="14">
    <source>
    </source>
</evidence>
<evidence type="ECO:0000269" key="15">
    <source>
    </source>
</evidence>
<evidence type="ECO:0000305" key="16"/>
<evidence type="ECO:0007744" key="17">
    <source>
    </source>
</evidence>
<evidence type="ECO:0007744" key="18">
    <source>
    </source>
</evidence>
<evidence type="ECO:0007744" key="19">
    <source>
    </source>
</evidence>
<evidence type="ECO:0007829" key="20">
    <source>
        <dbReference type="PDB" id="3SYX"/>
    </source>
</evidence>
<gene>
    <name type="primary">SPRED1</name>
</gene>
<keyword id="KW-0002">3D-structure</keyword>
<keyword id="KW-0007">Acetylation</keyword>
<keyword id="KW-1003">Cell membrane</keyword>
<keyword id="KW-0225">Disease variant</keyword>
<keyword id="KW-0449">Lipoprotein</keyword>
<keyword id="KW-0472">Membrane</keyword>
<keyword id="KW-0488">Methylation</keyword>
<keyword id="KW-0539">Nucleus</keyword>
<keyword id="KW-0564">Palmitate</keyword>
<keyword id="KW-0597">Phosphoprotein</keyword>
<keyword id="KW-1267">Proteomics identification</keyword>
<keyword id="KW-1185">Reference proteome</keyword>
<keyword id="KW-0832">Ubl conjugation</keyword>
<comment type="function">
    <text evidence="1 11">Tyrosine kinase substrate that inhibits growth-factor-mediated activation of MAP kinase (By similarity). Negatively regulates hematopoiesis of bone marrow (By similarity). Inhibits fibroblast growth factor (FGF)-induced retinal lens fiber differentiation, probably by inhibiting FGF-mediated phosphorylation of ERK1/2 (By similarity). Attenuates actin stress fiber formation via inhibition of TESK1-mediated phosphorylation of cofilin (PubMed:18216281). Inhibits TGFB-induced epithelial-to-mesenchymal transition in lens epithelial cells (By similarity).</text>
</comment>
<comment type="subunit">
    <text evidence="1 7 8 11 15">Homodimer and heterodimer (PubMed:15683364). Able to interact with SPRED2 to form heterodimers (PubMed:15683364). Interacts (via C-terminus) with TAOK1/MARKK (via C-terminus); the interaction does not affect TAOK1 kinase activity (PubMed:18216281). Interacts (via C-terminus) with TESK1 (via C-terminus); the interaction inhibits TESK1 kinase activity (PubMed:18216281). Interacts with CAV1 (PubMed:16115197). Interacts with RAS (By similarity). Interacts with palmitoyltransferase ZDHHC17/HIP14; the interaction leads to palmitoylation of SPRED1 (PubMed:24705354).</text>
</comment>
<comment type="interaction">
    <interactant intactId="EBI-5235340">
        <id>Q7Z699</id>
    </interactant>
    <interactant intactId="EBI-16436655">
        <id>Q6H8Q1-8</id>
        <label>ABLIM2</label>
    </interactant>
    <organismsDiffer>false</organismsDiffer>
    <experiments>3</experiments>
</comment>
<comment type="interaction">
    <interactant intactId="EBI-5235340">
        <id>Q7Z699</id>
    </interactant>
    <interactant intactId="EBI-12811089">
        <id>Q8NC06-3</id>
        <label>ACBD4</label>
    </interactant>
    <organismsDiffer>false</organismsDiffer>
    <experiments>3</experiments>
</comment>
<comment type="interaction">
    <interactant intactId="EBI-5235340">
        <id>Q7Z699</id>
    </interactant>
    <interactant intactId="EBI-25884472">
        <id>P26436</id>
        <label>ACRV1</label>
    </interactant>
    <organismsDiffer>false</organismsDiffer>
    <experiments>3</experiments>
</comment>
<comment type="interaction">
    <interactant intactId="EBI-5235340">
        <id>Q7Z699</id>
    </interactant>
    <interactant intactId="EBI-10173507">
        <id>Q6UY14-3</id>
        <label>ADAMTSL4</label>
    </interactant>
    <organismsDiffer>false</organismsDiffer>
    <experiments>3</experiments>
</comment>
<comment type="interaction">
    <interactant intactId="EBI-5235340">
        <id>Q7Z699</id>
    </interactant>
    <interactant intactId="EBI-2809203">
        <id>Q7Z6V5</id>
        <label>ADAT2</label>
    </interactant>
    <organismsDiffer>false</organismsDiffer>
    <experiments>3</experiments>
</comment>
<comment type="interaction">
    <interactant intactId="EBI-5235340">
        <id>Q7Z699</id>
    </interactant>
    <interactant intactId="EBI-528269">
        <id>Q9UKV8</id>
        <label>AGO2</label>
    </interactant>
    <organismsDiffer>false</organismsDiffer>
    <experiments>3</experiments>
</comment>
<comment type="interaction">
    <interactant intactId="EBI-5235340">
        <id>Q7Z699</id>
    </interactant>
    <interactant intactId="EBI-2116455">
        <id>Q04828</id>
        <label>AKR1C1</label>
    </interactant>
    <organismsDiffer>false</organismsDiffer>
    <experiments>3</experiments>
</comment>
<comment type="interaction">
    <interactant intactId="EBI-5235340">
        <id>Q7Z699</id>
    </interactant>
    <interactant intactId="EBI-79934">
        <id>P09917</id>
        <label>ALOX5</label>
    </interactant>
    <organismsDiffer>false</organismsDiffer>
    <experiments>3</experiments>
</comment>
<comment type="interaction">
    <interactant intactId="EBI-5235340">
        <id>Q7Z699</id>
    </interactant>
    <interactant intactId="EBI-25840993">
        <id>Q6ZTN6-2</id>
        <label>ANKRD13D</label>
    </interactant>
    <organismsDiffer>false</organismsDiffer>
    <experiments>3</experiments>
</comment>
<comment type="interaction">
    <interactant intactId="EBI-5235340">
        <id>Q7Z699</id>
    </interactant>
    <interactant intactId="EBI-5661893">
        <id>Q86SG2</id>
        <label>ANKRD23</label>
    </interactant>
    <organismsDiffer>false</organismsDiffer>
    <experiments>3</experiments>
</comment>
<comment type="interaction">
    <interactant intactId="EBI-5235340">
        <id>Q7Z699</id>
    </interactant>
    <interactant intactId="EBI-11954519">
        <id>Q49AR9</id>
        <label>ANKS1A</label>
    </interactant>
    <organismsDiffer>false</organismsDiffer>
    <experiments>3</experiments>
</comment>
<comment type="interaction">
    <interactant intactId="EBI-5235340">
        <id>Q7Z699</id>
    </interactant>
    <interactant intactId="EBI-12177015">
        <id>P53677-2</id>
        <label>AP3M2</label>
    </interactant>
    <organismsDiffer>false</organismsDiffer>
    <experiments>3</experiments>
</comment>
<comment type="interaction">
    <interactant intactId="EBI-5235340">
        <id>Q7Z699</id>
    </interactant>
    <interactant intactId="EBI-1047565">
        <id>P07741</id>
        <label>APRT</label>
    </interactant>
    <organismsDiffer>false</organismsDiffer>
    <experiments>3</experiments>
</comment>
<comment type="interaction">
    <interactant intactId="EBI-5235340">
        <id>Q7Z699</id>
    </interactant>
    <interactant intactId="EBI-745213">
        <id>P29972</id>
        <label>AQP1</label>
    </interactant>
    <organismsDiffer>false</organismsDiffer>
    <experiments>3</experiments>
</comment>
<comment type="interaction">
    <interactant intactId="EBI-5235340">
        <id>Q7Z699</id>
    </interactant>
    <interactant intactId="EBI-18172597">
        <id>Q9NXL2-1</id>
        <label>ARHGEF38</label>
    </interactant>
    <organismsDiffer>false</organismsDiffer>
    <experiments>3</experiments>
</comment>
<comment type="interaction">
    <interactant intactId="EBI-5235340">
        <id>Q7Z699</id>
    </interactant>
    <interactant intactId="EBI-25931672">
        <id>Q9UBL0-2</id>
        <label>ARPP21</label>
    </interactant>
    <organismsDiffer>false</organismsDiffer>
    <experiments>3</experiments>
</comment>
<comment type="interaction">
    <interactant intactId="EBI-5235340">
        <id>Q7Z699</id>
    </interactant>
    <interactant intactId="EBI-707573">
        <id>Q8WXK3</id>
        <label>ASB13</label>
    </interactant>
    <organismsDiffer>false</organismsDiffer>
    <experiments>3</experiments>
</comment>
<comment type="interaction">
    <interactant intactId="EBI-5235340">
        <id>Q7Z699</id>
    </interactant>
    <interactant intactId="EBI-12015080">
        <id>Q8WXK3-2</id>
        <label>ASB13</label>
    </interactant>
    <organismsDiffer>false</organismsDiffer>
    <experiments>3</experiments>
</comment>
<comment type="interaction">
    <interactant intactId="EBI-5235340">
        <id>Q7Z699</id>
    </interactant>
    <interactant intactId="EBI-14199987">
        <id>Q9Y575-3</id>
        <label>ASB3</label>
    </interactant>
    <organismsDiffer>false</organismsDiffer>
    <experiments>3</experiments>
</comment>
<comment type="interaction">
    <interactant intactId="EBI-5235340">
        <id>Q7Z699</id>
    </interactant>
    <interactant intactId="EBI-25843552">
        <id>Q96DX5-3</id>
        <label>ASB9</label>
    </interactant>
    <organismsDiffer>false</organismsDiffer>
    <experiments>3</experiments>
</comment>
<comment type="interaction">
    <interactant intactId="EBI-5235340">
        <id>Q7Z699</id>
    </interactant>
    <interactant intactId="EBI-10254793">
        <id>Q6XD76</id>
        <label>ASCL4</label>
    </interactant>
    <organismsDiffer>false</organismsDiffer>
    <experiments>3</experiments>
</comment>
<comment type="interaction">
    <interactant intactId="EBI-5235340">
        <id>Q7Z699</id>
    </interactant>
    <interactant intactId="EBI-9089489">
        <id>Q96FT7-4</id>
        <label>ASIC4</label>
    </interactant>
    <organismsDiffer>false</organismsDiffer>
    <experiments>3</experiments>
</comment>
<comment type="interaction">
    <interactant intactId="EBI-5235340">
        <id>Q7Z699</id>
    </interactant>
    <interactant intactId="EBI-2410266">
        <id>Q8WXF7</id>
        <label>ATL1</label>
    </interactant>
    <organismsDiffer>false</organismsDiffer>
    <experiments>3</experiments>
</comment>
<comment type="interaction">
    <interactant intactId="EBI-5235340">
        <id>Q7Z699</id>
    </interactant>
    <interactant intactId="EBI-718459">
        <id>Q9UII2</id>
        <label>ATP5IF1</label>
    </interactant>
    <organismsDiffer>false</organismsDiffer>
    <experiments>3</experiments>
</comment>
<comment type="interaction">
    <interactant intactId="EBI-5235340">
        <id>Q7Z699</id>
    </interactant>
    <interactant intactId="EBI-21568482">
        <id>Q9ULK2-2</id>
        <label>ATXN7L1</label>
    </interactant>
    <organismsDiffer>false</organismsDiffer>
    <experiments>3</experiments>
</comment>
<comment type="interaction">
    <interactant intactId="EBI-5235340">
        <id>Q7Z699</id>
    </interactant>
    <interactant intactId="EBI-710484">
        <id>O15169</id>
        <label>AXIN1</label>
    </interactant>
    <organismsDiffer>false</organismsDiffer>
    <experiments>3</experiments>
</comment>
<comment type="interaction">
    <interactant intactId="EBI-5235340">
        <id>Q7Z699</id>
    </interactant>
    <interactant intactId="EBI-10988864">
        <id>P46379-2</id>
        <label>BAG6</label>
    </interactant>
    <organismsDiffer>false</organismsDiffer>
    <experiments>3</experiments>
</comment>
<comment type="interaction">
    <interactant intactId="EBI-5235340">
        <id>Q7Z699</id>
    </interactant>
    <interactant intactId="EBI-742750">
        <id>Q8TBE0</id>
        <label>BAHD1</label>
    </interactant>
    <organismsDiffer>false</organismsDiffer>
    <experiments>3</experiments>
</comment>
<comment type="interaction">
    <interactant intactId="EBI-5235340">
        <id>Q7Z699</id>
    </interactant>
    <interactant intactId="EBI-519866">
        <id>Q16611</id>
        <label>BAK1</label>
    </interactant>
    <organismsDiffer>false</organismsDiffer>
    <experiments>3</experiments>
</comment>
<comment type="interaction">
    <interactant intactId="EBI-5235340">
        <id>Q7Z699</id>
    </interactant>
    <interactant intactId="EBI-749503">
        <id>Q16520</id>
        <label>BATF</label>
    </interactant>
    <organismsDiffer>false</organismsDiffer>
    <experiments>3</experiments>
</comment>
<comment type="interaction">
    <interactant intactId="EBI-5235340">
        <id>Q7Z699</id>
    </interactant>
    <interactant intactId="EBI-745073">
        <id>Q9BXY8</id>
        <label>BEX2</label>
    </interactant>
    <organismsDiffer>false</organismsDiffer>
    <experiments>3</experiments>
</comment>
<comment type="interaction">
    <interactant intactId="EBI-5235340">
        <id>Q7Z699</id>
    </interactant>
    <interactant intactId="EBI-741753">
        <id>Q00994</id>
        <label>BEX3</label>
    </interactant>
    <organismsDiffer>false</organismsDiffer>
    <experiments>3</experiments>
</comment>
<comment type="interaction">
    <interactant intactId="EBI-5235340">
        <id>Q7Z699</id>
    </interactant>
    <interactant intactId="EBI-10243741">
        <id>Q5H9J7</id>
        <label>BEX5</label>
    </interactant>
    <organismsDiffer>false</organismsDiffer>
    <experiments>3</experiments>
</comment>
<comment type="interaction">
    <interactant intactId="EBI-5235340">
        <id>Q7Z699</id>
    </interactant>
    <interactant intactId="EBI-2548012">
        <id>Q9H2G9</id>
        <label>BLZF1</label>
    </interactant>
    <organismsDiffer>false</organismsDiffer>
    <experiments>3</experiments>
</comment>
<comment type="interaction">
    <interactant intactId="EBI-5235340">
        <id>Q7Z699</id>
    </interactant>
    <interactant intactId="EBI-2837444">
        <id>Q8WUW1</id>
        <label>BRK1</label>
    </interactant>
    <organismsDiffer>false</organismsDiffer>
    <experiments>3</experiments>
</comment>
<comment type="interaction">
    <interactant intactId="EBI-5235340">
        <id>Q7Z699</id>
    </interactant>
    <interactant intactId="EBI-23662416">
        <id>Q9ULD4-2</id>
        <label>BRPF3</label>
    </interactant>
    <organismsDiffer>false</organismsDiffer>
    <experiments>3</experiments>
</comment>
<comment type="interaction">
    <interactant intactId="EBI-5235340">
        <id>Q7Z699</id>
    </interactant>
    <interactant intactId="EBI-747505">
        <id>Q8TAB5</id>
        <label>C1orf216</label>
    </interactant>
    <organismsDiffer>false</organismsDiffer>
    <experiments>3</experiments>
</comment>
<comment type="interaction">
    <interactant intactId="EBI-5235340">
        <id>Q7Z699</id>
    </interactant>
    <interactant intactId="EBI-7317823">
        <id>Q6P5X5</id>
        <label>C22orf39</label>
    </interactant>
    <organismsDiffer>false</organismsDiffer>
    <experiments>3</experiments>
</comment>
<comment type="interaction">
    <interactant intactId="EBI-5235340">
        <id>Q7Z699</id>
    </interactant>
    <interactant intactId="EBI-11603468">
        <id>Q2NKX9</id>
        <label>C2orf68</label>
    </interactant>
    <organismsDiffer>false</organismsDiffer>
    <experiments>3</experiments>
</comment>
<comment type="interaction">
    <interactant intactId="EBI-5235340">
        <id>Q7Z699</id>
    </interactant>
    <interactant intactId="EBI-2837036">
        <id>Q6ZUJ4</id>
        <label>C3orf62</label>
    </interactant>
    <organismsDiffer>false</organismsDiffer>
    <experiments>3</experiments>
</comment>
<comment type="interaction">
    <interactant intactId="EBI-5235340">
        <id>Q7Z699</id>
    </interactant>
    <interactant intactId="EBI-751596">
        <id>Q96LL4</id>
        <label>C8orf48</label>
    </interactant>
    <organismsDiffer>false</organismsDiffer>
    <experiments>3</experiments>
</comment>
<comment type="interaction">
    <interactant intactId="EBI-5235340">
        <id>Q7Z699</id>
    </interactant>
    <interactant intactId="EBI-1047244">
        <id>Q9H9S4</id>
        <label>CAB39L</label>
    </interactant>
    <organismsDiffer>false</organismsDiffer>
    <experiments>3</experiments>
</comment>
<comment type="interaction">
    <interactant intactId="EBI-5235340">
        <id>Q7Z699</id>
    </interactant>
    <interactant intactId="EBI-397435">
        <id>P62158</id>
        <label>CALM3</label>
    </interactant>
    <organismsDiffer>false</organismsDiffer>
    <experiments>3</experiments>
</comment>
<comment type="interaction">
    <interactant intactId="EBI-5235340">
        <id>Q7Z699</id>
    </interactant>
    <interactant intactId="EBI-4291044">
        <id>P40121</id>
        <label>CAPG</label>
    </interactant>
    <organismsDiffer>false</organismsDiffer>
    <experiments>3</experiments>
</comment>
<comment type="interaction">
    <interactant intactId="EBI-5235340">
        <id>Q7Z699</id>
    </interactant>
    <interactant intactId="EBI-11974585">
        <id>Q14781-2</id>
        <label>CBX2</label>
    </interactant>
    <organismsDiffer>false</organismsDiffer>
    <experiments>3</experiments>
</comment>
<comment type="interaction">
    <interactant intactId="EBI-5235340">
        <id>Q7Z699</id>
    </interactant>
    <interactant intactId="EBI-21796846">
        <id>Q5M9N0-2</id>
        <label>CCDC158</label>
    </interactant>
    <organismsDiffer>false</organismsDiffer>
    <experiments>3</experiments>
</comment>
<comment type="interaction">
    <interactant intactId="EBI-5235340">
        <id>Q7Z699</id>
    </interactant>
    <interactant intactId="EBI-740814">
        <id>Q8N715</id>
        <label>CCDC185</label>
    </interactant>
    <organismsDiffer>false</organismsDiffer>
    <experiments>3</experiments>
</comment>
<comment type="interaction">
    <interactant intactId="EBI-5235340">
        <id>Q7Z699</id>
    </interactant>
    <interactant intactId="EBI-746041">
        <id>Q8TC90</id>
        <label>CCER1</label>
    </interactant>
    <organismsDiffer>false</organismsDiffer>
    <experiments>3</experiments>
</comment>
<comment type="interaction">
    <interactant intactId="EBI-5235340">
        <id>Q7Z699</id>
    </interactant>
    <interactant intactId="EBI-395261">
        <id>P24863</id>
        <label>CCNC</label>
    </interactant>
    <organismsDiffer>false</organismsDiffer>
    <experiments>3</experiments>
</comment>
<comment type="interaction">
    <interactant intactId="EBI-5235340">
        <id>Q7Z699</id>
    </interactant>
    <interactant intactId="EBI-520729">
        <id>P26842</id>
        <label>CD27</label>
    </interactant>
    <organismsDiffer>false</organismsDiffer>
    <experiments>3</experiments>
</comment>
<comment type="interaction">
    <interactant intactId="EBI-5235340">
        <id>Q7Z699</id>
    </interactant>
    <interactant intactId="EBI-396137">
        <id>Q9UJX2</id>
        <label>CDC23</label>
    </interactant>
    <organismsDiffer>false</organismsDiffer>
    <experiments>3</experiments>
</comment>
<comment type="interaction">
    <interactant intactId="EBI-5235340">
        <id>Q7Z699</id>
    </interactant>
    <interactant intactId="EBI-9091443">
        <id>Q96GN5-2</id>
        <label>CDCA7L</label>
    </interactant>
    <organismsDiffer>false</organismsDiffer>
    <experiments>3</experiments>
</comment>
<comment type="interaction">
    <interactant intactId="EBI-5235340">
        <id>Q7Z699</id>
    </interactant>
    <interactant intactId="EBI-375077">
        <id>P38936</id>
        <label>CDKN1A</label>
    </interactant>
    <organismsDiffer>false</organismsDiffer>
    <experiments>4</experiments>
</comment>
<comment type="interaction">
    <interactant intactId="EBI-5235340">
        <id>Q7Z699</id>
    </interactant>
    <interactant intactId="EBI-3913685">
        <id>O95674</id>
        <label>CDS2</label>
    </interactant>
    <organismsDiffer>false</organismsDiffer>
    <experiments>3</experiments>
</comment>
<comment type="interaction">
    <interactant intactId="EBI-5235340">
        <id>Q7Z699</id>
    </interactant>
    <interactant intactId="EBI-5529649">
        <id>Q8N2Z9</id>
        <label>CENPS</label>
    </interactant>
    <organismsDiffer>false</organismsDiffer>
    <experiments>3</experiments>
</comment>
<comment type="interaction">
    <interactant intactId="EBI-5235340">
        <id>Q7Z699</id>
    </interactant>
    <interactant intactId="EBI-1210604">
        <id>Q7Z7K6</id>
        <label>CENPV</label>
    </interactant>
    <organismsDiffer>false</organismsDiffer>
    <experiments>3</experiments>
</comment>
<comment type="interaction">
    <interactant intactId="EBI-5235340">
        <id>Q7Z699</id>
    </interactant>
    <interactant intactId="EBI-25843412">
        <id>Q9BYV8-2</id>
        <label>CEP41</label>
    </interactant>
    <organismsDiffer>false</organismsDiffer>
    <experiments>3</experiments>
</comment>
<comment type="interaction">
    <interactant intactId="EBI-5235340">
        <id>Q7Z699</id>
    </interactant>
    <interactant intactId="EBI-1266347">
        <id>O95684-2</id>
        <label>CEP43</label>
    </interactant>
    <organismsDiffer>false</organismsDiffer>
    <experiments>3</experiments>
</comment>
<comment type="interaction">
    <interactant intactId="EBI-5235340">
        <id>Q7Z699</id>
    </interactant>
    <interactant intactId="EBI-308614">
        <id>Q86XR8</id>
        <label>CEP57</label>
    </interactant>
    <organismsDiffer>false</organismsDiffer>
    <experiments>3</experiments>
</comment>
<comment type="interaction">
    <interactant intactId="EBI-5235340">
        <id>Q7Z699</id>
    </interactant>
    <interactant intactId="EBI-11526150">
        <id>Q8NHQ1-3</id>
        <label>CEP70</label>
    </interactant>
    <organismsDiffer>false</organismsDiffer>
    <experiments>3</experiments>
</comment>
<comment type="interaction">
    <interactant intactId="EBI-5235340">
        <id>Q7Z699</id>
    </interactant>
    <interactant intactId="EBI-11953200">
        <id>Q494V2-2</id>
        <label>CFAP100</label>
    </interactant>
    <organismsDiffer>false</organismsDiffer>
    <experiments>3</experiments>
</comment>
<comment type="interaction">
    <interactant intactId="EBI-5235340">
        <id>Q7Z699</id>
    </interactant>
    <interactant intactId="EBI-749253">
        <id>Q8WUX9</id>
        <label>CHMP7</label>
    </interactant>
    <organismsDiffer>false</organismsDiffer>
    <experiments>3</experiments>
</comment>
<comment type="interaction">
    <interactant intactId="EBI-5235340">
        <id>Q7Z699</id>
    </interactant>
    <interactant intactId="EBI-372594">
        <id>Q99828</id>
        <label>CIB1</label>
    </interactant>
    <organismsDiffer>false</organismsDiffer>
    <experiments>3</experiments>
</comment>
<comment type="interaction">
    <interactant intactId="EBI-5235340">
        <id>Q7Z699</id>
    </interactant>
    <interactant intactId="EBI-6660184">
        <id>Q3SX64</id>
        <label>CIMAP1D</label>
    </interactant>
    <organismsDiffer>false</organismsDiffer>
    <experiments>3</experiments>
</comment>
<comment type="interaction">
    <interactant intactId="EBI-5235340">
        <id>Q7Z699</id>
    </interactant>
    <interactant intactId="EBI-4402346">
        <id>P51798</id>
        <label>CLCN7</label>
    </interactant>
    <organismsDiffer>false</organismsDiffer>
    <experiments>3</experiments>
</comment>
<comment type="interaction">
    <interactant intactId="EBI-5235340">
        <id>Q7Z699</id>
    </interactant>
    <interactant intactId="EBI-2835965">
        <id>Q9BT09</id>
        <label>CNPY3</label>
    </interactant>
    <organismsDiffer>false</organismsDiffer>
    <experiments>3</experiments>
</comment>
<comment type="interaction">
    <interactant intactId="EBI-5235340">
        <id>Q7Z699</id>
    </interactant>
    <interactant intactId="EBI-6269632">
        <id>Q96BR5</id>
        <label>COA7</label>
    </interactant>
    <organismsDiffer>false</organismsDiffer>
    <experiments>3</experiments>
</comment>
<comment type="interaction">
    <interactant intactId="EBI-5235340">
        <id>Q7Z699</id>
    </interactant>
    <interactant intactId="EBI-1550220">
        <id>Q86X83</id>
        <label>COMMD2</label>
    </interactant>
    <organismsDiffer>false</organismsDiffer>
    <experiments>3</experiments>
</comment>
<comment type="interaction">
    <interactant intactId="EBI-5235340">
        <id>Q7Z699</id>
    </interactant>
    <interactant intactId="EBI-711311">
        <id>Q14061</id>
        <label>COX17</label>
    </interactant>
    <organismsDiffer>false</organismsDiffer>
    <experiments>3</experiments>
</comment>
<comment type="interaction">
    <interactant intactId="EBI-5235340">
        <id>Q7Z699</id>
    </interactant>
    <interactant intactId="EBI-739773">
        <id>Q9BSW2</id>
        <label>CRACR2A</label>
    </interactant>
    <organismsDiffer>false</organismsDiffer>
    <experiments>3</experiments>
</comment>
<comment type="interaction">
    <interactant intactId="EBI-5235340">
        <id>Q7Z699</id>
    </interactant>
    <interactant intactId="EBI-10192698">
        <id>Q02930-3</id>
        <label>CREB5</label>
    </interactant>
    <organismsDiffer>false</organismsDiffer>
    <experiments>6</experiments>
</comment>
<comment type="interaction">
    <interactant intactId="EBI-5235340">
        <id>Q7Z699</id>
    </interactant>
    <interactant intactId="EBI-21670927">
        <id>Q6UXH1-2</id>
        <label>CRELD2</label>
    </interactant>
    <organismsDiffer>false</organismsDiffer>
    <experiments>3</experiments>
</comment>
<comment type="interaction">
    <interactant intactId="EBI-5235340">
        <id>Q7Z699</id>
    </interactant>
    <interactant intactId="EBI-2872414">
        <id>Q8IUI8</id>
        <label>CRLF3</label>
    </interactant>
    <organismsDiffer>false</organismsDiffer>
    <experiments>3</experiments>
</comment>
<comment type="interaction">
    <interactant intactId="EBI-5235340">
        <id>Q7Z699</id>
    </interactant>
    <interactant intactId="EBI-724303">
        <id>P01040</id>
        <label>CSTA</label>
    </interactant>
    <organismsDiffer>false</organismsDiffer>
    <experiments>3</experiments>
</comment>
<comment type="interaction">
    <interactant intactId="EBI-5235340">
        <id>Q7Z699</id>
    </interactant>
    <interactant intactId="EBI-491549">
        <id>P35222</id>
        <label>CTNNB1</label>
    </interactant>
    <organismsDiffer>false</organismsDiffer>
    <experiments>3</experiments>
</comment>
<comment type="interaction">
    <interactant intactId="EBI-5235340">
        <id>Q7Z699</id>
    </interactant>
    <interactant intactId="EBI-1047323">
        <id>P53634</id>
        <label>CTSC</label>
    </interactant>
    <organismsDiffer>false</organismsDiffer>
    <experiments>3</experiments>
</comment>
<comment type="interaction">
    <interactant intactId="EBI-5235340">
        <id>Q7Z699</id>
    </interactant>
    <interactant intactId="EBI-12024320">
        <id>Q8TB03</id>
        <label>CXorf38</label>
    </interactant>
    <organismsDiffer>false</organismsDiffer>
    <experiments>3</experiments>
</comment>
<comment type="interaction">
    <interactant intactId="EBI-5235340">
        <id>Q7Z699</id>
    </interactant>
    <interactant intactId="EBI-1048143">
        <id>Q7L576</id>
        <label>CYFIP1</label>
    </interactant>
    <organismsDiffer>false</organismsDiffer>
    <experiments>3</experiments>
</comment>
<comment type="interaction">
    <interactant intactId="EBI-5235340">
        <id>Q7Z699</id>
    </interactant>
    <interactant intactId="EBI-997814">
        <id>O60759</id>
        <label>CYTIP</label>
    </interactant>
    <organismsDiffer>false</organismsDiffer>
    <experiments>3</experiments>
</comment>
<comment type="interaction">
    <interactant intactId="EBI-5235340">
        <id>Q7Z699</id>
    </interactant>
    <interactant intactId="EBI-77321">
        <id>Q9UER7</id>
        <label>DAXX</label>
    </interactant>
    <organismsDiffer>false</organismsDiffer>
    <experiments>3</experiments>
</comment>
<comment type="interaction">
    <interactant intactId="EBI-5235340">
        <id>Q7Z699</id>
    </interactant>
    <interactant intactId="EBI-12205861">
        <id>Q8NFT6-2</id>
        <label>DBF4B</label>
    </interactant>
    <organismsDiffer>false</organismsDiffer>
    <experiments>3</experiments>
</comment>
<comment type="interaction">
    <interactant intactId="EBI-5235340">
        <id>Q7Z699</id>
    </interactant>
    <interactant intactId="EBI-25842815">
        <id>Q5TAQ9-2</id>
        <label>DCAF8</label>
    </interactant>
    <organismsDiffer>false</organismsDiffer>
    <experiments>3</experiments>
</comment>
<comment type="interaction">
    <interactant intactId="EBI-5235340">
        <id>Q7Z699</id>
    </interactant>
    <interactant intactId="EBI-3508943">
        <id>Q9H816</id>
        <label>DCLRE1B</label>
    </interactant>
    <organismsDiffer>false</organismsDiffer>
    <experiments>3</experiments>
</comment>
<comment type="interaction">
    <interactant intactId="EBI-5235340">
        <id>Q7Z699</id>
    </interactant>
    <interactant intactId="EBI-25933135">
        <id>Q8TF46-4</id>
        <label>DIS3L</label>
    </interactant>
    <organismsDiffer>false</organismsDiffer>
    <experiments>3</experiments>
</comment>
<comment type="interaction">
    <interactant intactId="EBI-5235340">
        <id>Q7Z699</id>
    </interactant>
    <interactant intactId="EBI-21555397">
        <id>P80370</id>
        <label>DLK1</label>
    </interactant>
    <organismsDiffer>false</organismsDiffer>
    <experiments>3</experiments>
</comment>
<comment type="interaction">
    <interactant intactId="EBI-5235340">
        <id>Q7Z699</id>
    </interactant>
    <interactant intactId="EBI-2795449">
        <id>Q9H147</id>
        <label>DNTTIP1</label>
    </interactant>
    <organismsDiffer>false</organismsDiffer>
    <experiments>3</experiments>
</comment>
<comment type="interaction">
    <interactant intactId="EBI-5235340">
        <id>Q7Z699</id>
    </interactant>
    <interactant intactId="EBI-23669343">
        <id>Q92782-2</id>
        <label>DPF1</label>
    </interactant>
    <organismsDiffer>false</organismsDiffer>
    <experiments>3</experiments>
</comment>
<comment type="interaction">
    <interactant intactId="EBI-5235340">
        <id>Q7Z699</id>
    </interactant>
    <interactant intactId="EBI-719542">
        <id>O14531</id>
        <label>DPYSL4</label>
    </interactant>
    <organismsDiffer>false</organismsDiffer>
    <experiments>3</experiments>
</comment>
<comment type="interaction">
    <interactant intactId="EBI-5235340">
        <id>Q7Z699</id>
    </interactant>
    <interactant intactId="EBI-750565">
        <id>P55039</id>
        <label>DRG2</label>
    </interactant>
    <organismsDiffer>false</organismsDiffer>
    <experiments>3</experiments>
</comment>
<comment type="interaction">
    <interactant intactId="EBI-5235340">
        <id>Q7Z699</id>
    </interactant>
    <interactant intactId="EBI-2340258">
        <id>Q8N9I9</id>
        <label>DTX3</label>
    </interactant>
    <organismsDiffer>false</organismsDiffer>
    <experiments>3</experiments>
</comment>
<comment type="interaction">
    <interactant intactId="EBI-5235340">
        <id>Q7Z699</id>
    </interactant>
    <interactant intactId="EBI-765426">
        <id>Q9UH73</id>
        <label>EBF1</label>
    </interactant>
    <organismsDiffer>false</organismsDiffer>
    <experiments>3</experiments>
</comment>
<comment type="interaction">
    <interactant intactId="EBI-5235340">
        <id>Q7Z699</id>
    </interactant>
    <interactant intactId="EBI-11132357">
        <id>O75530-2</id>
        <label>EED</label>
    </interactant>
    <organismsDiffer>false</organismsDiffer>
    <experiments>3</experiments>
</comment>
<comment type="interaction">
    <interactant intactId="EBI-5235340">
        <id>Q7Z699</id>
    </interactant>
    <interactant intactId="EBI-711990">
        <id>O00303</id>
        <label>EIF3F</label>
    </interactant>
    <organismsDiffer>false</organismsDiffer>
    <experiments>3</experiments>
</comment>
<comment type="interaction">
    <interactant intactId="EBI-5235340">
        <id>Q7Z699</id>
    </interactant>
    <interactant intactId="EBI-301024">
        <id>Q9NRA8</id>
        <label>EIF4ENIF1</label>
    </interactant>
    <organismsDiffer>false</organismsDiffer>
    <experiments>3</experiments>
</comment>
<comment type="interaction">
    <interactant intactId="EBI-5235340">
        <id>Q7Z699</id>
    </interactant>
    <interactant intactId="EBI-25838727">
        <id>P29323-3</id>
        <label>EPHB2</label>
    </interactant>
    <organismsDiffer>false</organismsDiffer>
    <experiments>3</experiments>
</comment>
<comment type="interaction">
    <interactant intactId="EBI-5235340">
        <id>Q7Z699</id>
    </interactant>
    <interactant intactId="EBI-3940939">
        <id>Q9H6S3</id>
        <label>EPS8L2</label>
    </interactant>
    <organismsDiffer>false</organismsDiffer>
    <experiments>3</experiments>
</comment>
<comment type="interaction">
    <interactant intactId="EBI-5235340">
        <id>Q7Z699</id>
    </interactant>
    <interactant intactId="EBI-10486892">
        <id>Q96A10</id>
        <label>ERVK3-1</label>
    </interactant>
    <organismsDiffer>false</organismsDiffer>
    <experiments>3</experiments>
</comment>
<comment type="interaction">
    <interactant intactId="EBI-5235340">
        <id>Q7Z699</id>
    </interactant>
    <interactant intactId="EBI-13371226">
        <id>Q9NYK6-3</id>
        <label>EURL</label>
    </interactant>
    <organismsDiffer>false</organismsDiffer>
    <experiments>3</experiments>
</comment>
<comment type="interaction">
    <interactant intactId="EBI-5235340">
        <id>Q7Z699</id>
    </interactant>
    <interactant intactId="EBI-949824">
        <id>O00471</id>
        <label>EXOC5</label>
    </interactant>
    <organismsDiffer>false</organismsDiffer>
    <experiments>3</experiments>
</comment>
<comment type="interaction">
    <interactant intactId="EBI-5235340">
        <id>Q7Z699</id>
    </interactant>
    <interactant intactId="EBI-1223394">
        <id>Q8TAG9</id>
        <label>EXOC6</label>
    </interactant>
    <organismsDiffer>false</organismsDiffer>
    <experiments>3</experiments>
</comment>
<comment type="interaction">
    <interactant intactId="EBI-5235340">
        <id>Q7Z699</id>
    </interactant>
    <interactant intactId="EBI-21506125">
        <id>Q9UBQ6</id>
        <label>EXTL2</label>
    </interactant>
    <organismsDiffer>false</organismsDiffer>
    <experiments>3</experiments>
</comment>
<comment type="interaction">
    <interactant intactId="EBI-5235340">
        <id>Q7Z699</id>
    </interactant>
    <interactant intactId="EBI-10699473">
        <id>Q15910-2</id>
        <label>EZH2</label>
    </interactant>
    <organismsDiffer>false</organismsDiffer>
    <experiments>3</experiments>
</comment>
<comment type="interaction">
    <interactant intactId="EBI-5235340">
        <id>Q7Z699</id>
    </interactant>
    <interactant intactId="EBI-10697159">
        <id>O15540</id>
        <label>FABP7</label>
    </interactant>
    <organismsDiffer>false</organismsDiffer>
    <experiments>3</experiments>
</comment>
<comment type="interaction">
    <interactant intactId="EBI-5235340">
        <id>Q7Z699</id>
    </interactant>
    <interactant intactId="EBI-718246">
        <id>Q9UNN5</id>
        <label>FAF1</label>
    </interactant>
    <organismsDiffer>false</organismsDiffer>
    <experiments>3</experiments>
</comment>
<comment type="interaction">
    <interactant intactId="EBI-5235340">
        <id>Q7Z699</id>
    </interactant>
    <interactant intactId="EBI-719941">
        <id>Q3B820</id>
        <label>FAM161A</label>
    </interactant>
    <organismsDiffer>false</organismsDiffer>
    <experiments>3</experiments>
</comment>
<comment type="interaction">
    <interactant intactId="EBI-5235340">
        <id>Q7Z699</id>
    </interactant>
    <interactant intactId="EBI-11960181">
        <id>A4D161</id>
        <label>FAM221A</label>
    </interactant>
    <organismsDiffer>false</organismsDiffer>
    <experiments>3</experiments>
</comment>
<comment type="interaction">
    <interactant intactId="EBI-5235340">
        <id>Q7Z699</id>
    </interactant>
    <interactant intactId="EBI-25843965">
        <id>A6H8Z2-3</id>
        <label>FAM221B</label>
    </interactant>
    <organismsDiffer>false</organismsDiffer>
    <experiments>3</experiments>
</comment>
<comment type="interaction">
    <interactant intactId="EBI-5235340">
        <id>Q7Z699</id>
    </interactant>
    <interactant intactId="EBI-6658203">
        <id>Q86YD7</id>
        <label>FAM90A1</label>
    </interactant>
    <organismsDiffer>false</organismsDiffer>
    <experiments>3</experiments>
</comment>
<comment type="interaction">
    <interactant intactId="EBI-5235340">
        <id>Q7Z699</id>
    </interactant>
    <interactant intactId="EBI-5461838">
        <id>Q17RN3</id>
        <label>FAM98C</label>
    </interactant>
    <organismsDiffer>false</organismsDiffer>
    <experiments>3</experiments>
</comment>
<comment type="interaction">
    <interactant intactId="EBI-5235340">
        <id>Q7Z699</id>
    </interactant>
    <interactant intactId="EBI-8468186">
        <id>Q8IZU1</id>
        <label>FAM9A</label>
    </interactant>
    <organismsDiffer>false</organismsDiffer>
    <experiments>3</experiments>
</comment>
<comment type="interaction">
    <interactant intactId="EBI-5235340">
        <id>Q7Z699</id>
    </interactant>
    <interactant intactId="EBI-81610">
        <id>O15287</id>
        <label>FANCG</label>
    </interactant>
    <organismsDiffer>false</organismsDiffer>
    <experiments>3</experiments>
</comment>
<comment type="interaction">
    <interactant intactId="EBI-5235340">
        <id>Q7Z699</id>
    </interactant>
    <interactant intactId="EBI-947897">
        <id>Q9UBX5</id>
        <label>FBLN5</label>
    </interactant>
    <organismsDiffer>false</organismsDiffer>
    <experiments>3</experiments>
</comment>
<comment type="interaction">
    <interactant intactId="EBI-5235340">
        <id>Q7Z699</id>
    </interactant>
    <interactant intactId="EBI-750641">
        <id>Q5TD97</id>
        <label>FHL5</label>
    </interactant>
    <organismsDiffer>false</organismsDiffer>
    <experiments>3</experiments>
</comment>
<comment type="interaction">
    <interactant intactId="EBI-5235340">
        <id>Q7Z699</id>
    </interactant>
    <interactant intactId="EBI-2372475">
        <id>Q96AY3</id>
        <label>FKBP10</label>
    </interactant>
    <organismsDiffer>false</organismsDiffer>
    <experiments>3</experiments>
</comment>
<comment type="interaction">
    <interactant intactId="EBI-5235340">
        <id>Q7Z699</id>
    </interactant>
    <interactant intactId="EBI-602349">
        <id>P49356</id>
        <label>FNTB</label>
    </interactant>
    <organismsDiffer>false</organismsDiffer>
    <experiments>3</experiments>
</comment>
<comment type="interaction">
    <interactant intactId="EBI-5235340">
        <id>Q7Z699</id>
    </interactant>
    <interactant intactId="EBI-25830360">
        <id>Q9Y261-2</id>
        <label>FOXA2</label>
    </interactant>
    <organismsDiffer>false</organismsDiffer>
    <experiments>3</experiments>
</comment>
<comment type="interaction">
    <interactant intactId="EBI-5235340">
        <id>Q7Z699</id>
    </interactant>
    <interactant intactId="EBI-2349801">
        <id>Q12841</id>
        <label>FSTL1</label>
    </interactant>
    <organismsDiffer>false</organismsDiffer>
    <experiments>3</experiments>
</comment>
<comment type="interaction">
    <interactant intactId="EBI-5235340">
        <id>Q7Z699</id>
    </interactant>
    <interactant intactId="EBI-10691738">
        <id>P06241-3</id>
        <label>FYN</label>
    </interactant>
    <organismsDiffer>false</organismsDiffer>
    <experiments>3</experiments>
</comment>
<comment type="interaction">
    <interactant intactId="EBI-5235340">
        <id>Q7Z699</id>
    </interactant>
    <interactant intactId="EBI-2466380">
        <id>Q9ULV1</id>
        <label>FZD4</label>
    </interactant>
    <organismsDiffer>false</organismsDiffer>
    <experiments>3</experiments>
</comment>
<comment type="interaction">
    <interactant intactId="EBI-5235340">
        <id>Q7Z699</id>
    </interactant>
    <interactant intactId="EBI-751757">
        <id>Q7L622</id>
        <label>G2E3</label>
    </interactant>
    <organismsDiffer>false</organismsDiffer>
    <experiments>3</experiments>
</comment>
<comment type="interaction">
    <interactant intactId="EBI-5235340">
        <id>Q7Z699</id>
    </interactant>
    <interactant intactId="EBI-9090198">
        <id>P15976-2</id>
        <label>GATA1</label>
    </interactant>
    <organismsDiffer>false</organismsDiffer>
    <experiments>3</experiments>
</comment>
<comment type="interaction">
    <interactant intactId="EBI-5235340">
        <id>Q7Z699</id>
    </interactant>
    <interactant intactId="EBI-744302">
        <id>P14136</id>
        <label>GFAP</label>
    </interactant>
    <organismsDiffer>false</organismsDiffer>
    <experiments>3</experiments>
</comment>
<comment type="interaction">
    <interactant intactId="EBI-5235340">
        <id>Q7Z699</id>
    </interactant>
    <interactant intactId="EBI-8799578">
        <id>Q9NXC2</id>
        <label>GFOD1</label>
    </interactant>
    <organismsDiffer>false</organismsDiffer>
    <experiments>3</experiments>
</comment>
<comment type="interaction">
    <interactant intactId="EBI-5235340">
        <id>Q7Z699</id>
    </interactant>
    <interactant intactId="EBI-2868909">
        <id>Q9H3K2</id>
        <label>GHITM</label>
    </interactant>
    <organismsDiffer>false</organismsDiffer>
    <experiments>3</experiments>
</comment>
<comment type="interaction">
    <interactant intactId="EBI-5235340">
        <id>Q7Z699</id>
    </interactant>
    <interactant intactId="EBI-3933251">
        <id>Q9NS71</id>
        <label>GKN1</label>
    </interactant>
    <organismsDiffer>false</organismsDiffer>
    <experiments>3</experiments>
</comment>
<comment type="interaction">
    <interactant intactId="EBI-5235340">
        <id>Q7Z699</id>
    </interactant>
    <interactant intactId="EBI-14061927">
        <id>P10075</id>
        <label>GLI4</label>
    </interactant>
    <organismsDiffer>false</organismsDiffer>
    <experiments>3</experiments>
</comment>
<comment type="interaction">
    <interactant intactId="EBI-5235340">
        <id>Q7Z699</id>
    </interactant>
    <interactant intactId="EBI-748515">
        <id>Q8IVS8</id>
        <label>GLYCTK</label>
    </interactant>
    <organismsDiffer>false</organismsDiffer>
    <experiments>3</experiments>
</comment>
<comment type="interaction">
    <interactant intactId="EBI-5235340">
        <id>Q7Z699</id>
    </interactant>
    <interactant intactId="EBI-745707">
        <id>Q8NEA9</id>
        <label>GMCL2</label>
    </interactant>
    <organismsDiffer>false</organismsDiffer>
    <experiments>3</experiments>
</comment>
<comment type="interaction">
    <interactant intactId="EBI-5235340">
        <id>Q7Z699</id>
    </interactant>
    <interactant intactId="EBI-356942">
        <id>P62879</id>
        <label>GNB2</label>
    </interactant>
    <organismsDiffer>false</organismsDiffer>
    <experiments>3</experiments>
</comment>
<comment type="interaction">
    <interactant intactId="EBI-5235340">
        <id>Q7Z699</id>
    </interactant>
    <interactant intactId="EBI-11959863">
        <id>Q9NWQ4-1</id>
        <label>GPATCH2L</label>
    </interactant>
    <organismsDiffer>false</organismsDiffer>
    <experiments>3</experiments>
</comment>
<comment type="interaction">
    <interactant intactId="EBI-5235340">
        <id>Q7Z699</id>
    </interactant>
    <interactant intactId="EBI-21649723">
        <id>Q7Z602</id>
        <label>GPR141</label>
    </interactant>
    <organismsDiffer>false</organismsDiffer>
    <experiments>3</experiments>
</comment>
<comment type="interaction">
    <interactant intactId="EBI-5235340">
        <id>Q7Z699</id>
    </interactant>
    <interactant intactId="EBI-749411">
        <id>Q96SL4</id>
        <label>GPX7</label>
    </interactant>
    <organismsDiffer>false</organismsDiffer>
    <experiments>3</experiments>
</comment>
<comment type="interaction">
    <interactant intactId="EBI-5235340">
        <id>Q7Z699</id>
    </interactant>
    <interactant intactId="EBI-25860013">
        <id>P28799-2</id>
        <label>GRN</label>
    </interactant>
    <organismsDiffer>false</organismsDiffer>
    <experiments>3</experiments>
</comment>
<comment type="interaction">
    <interactant intactId="EBI-5235340">
        <id>Q7Z699</id>
    </interactant>
    <interactant intactId="EBI-712457">
        <id>Q15486</id>
        <label>GUSBP1</label>
    </interactant>
    <organismsDiffer>false</organismsDiffer>
    <experiments>3</experiments>
</comment>
<comment type="interaction">
    <interactant intactId="EBI-5235340">
        <id>Q7Z699</id>
    </interactant>
    <interactant intactId="EBI-11320290">
        <id>O96004</id>
        <label>HAND1</label>
    </interactant>
    <organismsDiffer>false</organismsDiffer>
    <experiments>3</experiments>
</comment>
<comment type="interaction">
    <interactant intactId="EBI-5235340">
        <id>Q7Z699</id>
    </interactant>
    <interactant intactId="EBI-395719">
        <id>Q99871</id>
        <label>HAUS7</label>
    </interactant>
    <organismsDiffer>false</organismsDiffer>
    <experiments>3</experiments>
</comment>
<comment type="interaction">
    <interactant intactId="EBI-5235340">
        <id>Q7Z699</id>
    </interactant>
    <interactant intactId="EBI-25843825">
        <id>A8K0U2</id>
        <label>hCG_2001421</label>
    </interactant>
    <organismsDiffer>false</organismsDiffer>
    <experiments>3</experiments>
</comment>
<comment type="interaction">
    <interactant intactId="EBI-5235340">
        <id>Q7Z699</id>
    </interactant>
    <interactant intactId="EBI-5460660">
        <id>Q96MH2</id>
        <label>HEXIM2</label>
    </interactant>
    <organismsDiffer>false</organismsDiffer>
    <experiments>3</experiments>
</comment>
<comment type="interaction">
    <interactant intactId="EBI-5235340">
        <id>Q7Z699</id>
    </interactant>
    <interactant intactId="EBI-743438">
        <id>Q8IV36</id>
        <label>HID1</label>
    </interactant>
    <organismsDiffer>false</organismsDiffer>
    <experiments>3</experiments>
</comment>
<comment type="interaction">
    <interactant intactId="EBI-5235340">
        <id>Q7Z699</id>
    </interactant>
    <interactant intactId="EBI-713401">
        <id>Q9P0W2</id>
        <label>HMG20B</label>
    </interactant>
    <organismsDiffer>false</organismsDiffer>
    <experiments>3</experiments>
</comment>
<comment type="interaction">
    <interactant intactId="EBI-5235340">
        <id>Q7Z699</id>
    </interactant>
    <interactant intactId="EBI-740785">
        <id>P49639</id>
        <label>HOXA1</label>
    </interactant>
    <organismsDiffer>false</organismsDiffer>
    <experiments>3</experiments>
</comment>
<comment type="interaction">
    <interactant intactId="EBI-5235340">
        <id>Q7Z699</id>
    </interactant>
    <interactant intactId="EBI-1248457">
        <id>P09629</id>
        <label>HOXB7</label>
    </interactant>
    <organismsDiffer>false</organismsDiffer>
    <experiments>3</experiments>
</comment>
<comment type="interaction">
    <interactant intactId="EBI-5235340">
        <id>Q7Z699</id>
    </interactant>
    <interactant intactId="EBI-3923226">
        <id>P09017</id>
        <label>HOXC4</label>
    </interactant>
    <organismsDiffer>false</organismsDiffer>
    <experiments>3</experiments>
</comment>
<comment type="interaction">
    <interactant intactId="EBI-5235340">
        <id>Q7Z699</id>
    </interactant>
    <interactant intactId="EBI-749311">
        <id>P37235</id>
        <label>HPCAL1</label>
    </interactant>
    <organismsDiffer>false</organismsDiffer>
    <experiments>3</experiments>
</comment>
<comment type="interaction">
    <interactant intactId="EBI-5235340">
        <id>Q7Z699</id>
    </interactant>
    <interactant intactId="EBI-744820">
        <id>Q9UM19</id>
        <label>HPCAL4</label>
    </interactant>
    <organismsDiffer>false</organismsDiffer>
    <experiments>6</experiments>
</comment>
<comment type="interaction">
    <interactant intactId="EBI-5235340">
        <id>Q7Z699</id>
    </interactant>
    <interactant intactId="EBI-748210">
        <id>P00492</id>
        <label>HPRT1</label>
    </interactant>
    <organismsDiffer>false</organismsDiffer>
    <experiments>3</experiments>
</comment>
<comment type="interaction">
    <interactant intactId="EBI-5235340">
        <id>Q7Z699</id>
    </interactant>
    <interactant intactId="EBI-11335623">
        <id>Q53T59</id>
        <label>HS1BP3</label>
    </interactant>
    <organismsDiffer>false</organismsDiffer>
    <experiments>3</experiments>
</comment>
<comment type="interaction">
    <interactant intactId="EBI-5235340">
        <id>Q7Z699</id>
    </interactant>
    <interactant intactId="EBI-21761225">
        <id>P26439</id>
        <label>HSD3B2</label>
    </interactant>
    <organismsDiffer>false</organismsDiffer>
    <experiments>3</experiments>
</comment>
<comment type="interaction">
    <interactant intactId="EBI-5235340">
        <id>Q7Z699</id>
    </interactant>
    <interactant intactId="EBI-7116203">
        <id>O75031</id>
        <label>HSF2BP</label>
    </interactant>
    <organismsDiffer>false</organismsDiffer>
    <experiments>3</experiments>
</comment>
<comment type="interaction">
    <interactant intactId="EBI-5235340">
        <id>Q7Z699</id>
    </interactant>
    <interactant intactId="EBI-25930511">
        <id>Q05084-3</id>
        <label>ICA1</label>
    </interactant>
    <organismsDiffer>false</organismsDiffer>
    <experiments>3</experiments>
</comment>
<comment type="interaction">
    <interactant intactId="EBI-5235340">
        <id>Q7Z699</id>
    </interactant>
    <interactant intactId="EBI-1215527">
        <id>P41134</id>
        <label>ID1</label>
    </interactant>
    <organismsDiffer>false</organismsDiffer>
    <experiments>3</experiments>
</comment>
<comment type="interaction">
    <interactant intactId="EBI-5235340">
        <id>Q7Z699</id>
    </interactant>
    <interactant intactId="EBI-1387094">
        <id>Q02535</id>
        <label>ID3</label>
    </interactant>
    <organismsDiffer>false</organismsDiffer>
    <experiments>3</experiments>
</comment>
<comment type="interaction">
    <interactant intactId="EBI-5235340">
        <id>Q7Z699</id>
    </interactant>
    <interactant intactId="EBI-1754719">
        <id>P47928</id>
        <label>ID4</label>
    </interactant>
    <organismsDiffer>false</organismsDiffer>
    <experiments>3</experiments>
</comment>
<comment type="interaction">
    <interactant intactId="EBI-5235340">
        <id>Q7Z699</id>
    </interactant>
    <interactant intactId="EBI-9091197">
        <id>Q8IY31-3</id>
        <label>IFT20</label>
    </interactant>
    <organismsDiffer>false</organismsDiffer>
    <experiments>3</experiments>
</comment>
<comment type="interaction">
    <interactant intactId="EBI-5235340">
        <id>Q7Z699</id>
    </interactant>
    <interactant intactId="EBI-13646303">
        <id>P08833</id>
        <label>IGFBP1</label>
    </interactant>
    <organismsDiffer>false</organismsDiffer>
    <experiments>3</experiments>
</comment>
<comment type="interaction">
    <interactant intactId="EBI-5235340">
        <id>Q7Z699</id>
    </interactant>
    <interactant intactId="EBI-2831948">
        <id>P22692</id>
        <label>IGFBP4</label>
    </interactant>
    <organismsDiffer>false</organismsDiffer>
    <experiments>3</experiments>
</comment>
<comment type="interaction">
    <interactant intactId="EBI-5235340">
        <id>Q7Z699</id>
    </interactant>
    <interactant intactId="EBI-713456">
        <id>Q13123</id>
        <label>IK</label>
    </interactant>
    <organismsDiffer>false</organismsDiffer>
    <experiments>3</experiments>
</comment>
<comment type="interaction">
    <interactant intactId="EBI-5235340">
        <id>Q7Z699</id>
    </interactant>
    <interactant intactId="EBI-17178971">
        <id>Q14005-2</id>
        <label>IL16</label>
    </interactant>
    <organismsDiffer>false</organismsDiffer>
    <experiments>6</experiments>
</comment>
<comment type="interaction">
    <interactant intactId="EBI-5235340">
        <id>Q7Z699</id>
    </interactant>
    <interactant intactId="EBI-743980">
        <id>Q9NXX0</id>
        <label>ILF3</label>
    </interactant>
    <organismsDiffer>false</organismsDiffer>
    <experiments>3</experiments>
</comment>
<comment type="interaction">
    <interactant intactId="EBI-5235340">
        <id>Q7Z699</id>
    </interactant>
    <interactant intactId="EBI-2620298">
        <id>Q9H0C8</id>
        <label>ILKAP</label>
    </interactant>
    <organismsDiffer>false</organismsDiffer>
    <experiments>3</experiments>
</comment>
<comment type="interaction">
    <interactant intactId="EBI-5235340">
        <id>Q7Z699</id>
    </interactant>
    <interactant intactId="EBI-12330251">
        <id>P29218-3</id>
        <label>IMPA1</label>
    </interactant>
    <organismsDiffer>false</organismsDiffer>
    <experiments>3</experiments>
</comment>
<comment type="interaction">
    <interactant intactId="EBI-5235340">
        <id>Q7Z699</id>
    </interactant>
    <interactant intactId="EBI-2866661">
        <id>Q9UNL4</id>
        <label>ING4</label>
    </interactant>
    <organismsDiffer>false</organismsDiffer>
    <experiments>3</experiments>
</comment>
<comment type="interaction">
    <interactant intactId="EBI-5235340">
        <id>Q7Z699</id>
    </interactant>
    <interactant intactId="EBI-21602071">
        <id>Q8WYH8-2</id>
        <label>ING5</label>
    </interactant>
    <organismsDiffer>false</organismsDiffer>
    <experiments>3</experiments>
</comment>
<comment type="interaction">
    <interactant intactId="EBI-5235340">
        <id>Q7Z699</id>
    </interactant>
    <interactant intactId="EBI-10285157">
        <id>Q96EL1</id>
        <label>INKA1</label>
    </interactant>
    <organismsDiffer>false</organismsDiffer>
    <experiments>3</experiments>
</comment>
<comment type="interaction">
    <interactant intactId="EBI-5235340">
        <id>Q7Z699</id>
    </interactant>
    <interactant intactId="EBI-1237354">
        <id>Q86VI3</id>
        <label>IQGAP3</label>
    </interactant>
    <organismsDiffer>false</organismsDiffer>
    <experiments>3</experiments>
</comment>
<comment type="interaction">
    <interactant intactId="EBI-5235340">
        <id>Q7Z699</id>
    </interactant>
    <interactant intactId="EBI-10220600">
        <id>Q8NA54</id>
        <label>IQUB</label>
    </interactant>
    <organismsDiffer>false</organismsDiffer>
    <experiments>6</experiments>
</comment>
<comment type="interaction">
    <interactant intactId="EBI-5235340">
        <id>Q7Z699</id>
    </interactant>
    <interactant intactId="EBI-25840037">
        <id>Q9Y6F6-3</id>
        <label>IRAG1</label>
    </interactant>
    <organismsDiffer>false</organismsDiffer>
    <experiments>3</experiments>
</comment>
<comment type="interaction">
    <interactant intactId="EBI-5235340">
        <id>Q7Z699</id>
    </interactant>
    <interactant intactId="EBI-10258659">
        <id>Q86U28</id>
        <label>ISCA2</label>
    </interactant>
    <organismsDiffer>false</organismsDiffer>
    <experiments>3</experiments>
</comment>
<comment type="interaction">
    <interactant intactId="EBI-5235340">
        <id>Q7Z699</id>
    </interactant>
    <interactant intactId="EBI-1055254">
        <id>Q8WXH2</id>
        <label>JPH3</label>
    </interactant>
    <organismsDiffer>false</organismsDiffer>
    <experiments>3</experiments>
</comment>
<comment type="interaction">
    <interactant intactId="EBI-5235340">
        <id>Q7Z699</id>
    </interactant>
    <interactant intactId="EBI-477430">
        <id>Q92831</id>
        <label>KAT2B</label>
    </interactant>
    <organismsDiffer>false</organismsDiffer>
    <experiments>3</experiments>
</comment>
<comment type="interaction">
    <interactant intactId="EBI-5235340">
        <id>Q7Z699</id>
    </interactant>
    <interactant intactId="EBI-399080">
        <id>Q92993</id>
        <label>KAT5</label>
    </interactant>
    <organismsDiffer>false</organismsDiffer>
    <experiments>3</experiments>
</comment>
<comment type="interaction">
    <interactant intactId="EBI-5235340">
        <id>Q7Z699</id>
    </interactant>
    <interactant intactId="EBI-20795332">
        <id>Q92993-2</id>
        <label>KAT5</label>
    </interactant>
    <organismsDiffer>false</organismsDiffer>
    <experiments>3</experiments>
</comment>
<comment type="interaction">
    <interactant intactId="EBI-5235340">
        <id>Q7Z699</id>
    </interactant>
    <interactant intactId="EBI-1053003">
        <id>Q9NS61-2</id>
        <label>KCNIP2</label>
    </interactant>
    <organismsDiffer>false</organismsDiffer>
    <experiments>3</experiments>
</comment>
<comment type="interaction">
    <interactant intactId="EBI-5235340">
        <id>Q7Z699</id>
    </interactant>
    <interactant intactId="EBI-743960">
        <id>Q8N5Z5</id>
        <label>KCTD17</label>
    </interactant>
    <organismsDiffer>false</organismsDiffer>
    <experiments>3</experiments>
</comment>
<comment type="interaction">
    <interactant intactId="EBI-5235340">
        <id>Q7Z699</id>
    </interactant>
    <interactant intactId="EBI-751001">
        <id>Q14145</id>
        <label>KEAP1</label>
    </interactant>
    <organismsDiffer>false</organismsDiffer>
    <experiments>3</experiments>
</comment>
<comment type="interaction">
    <interactant intactId="EBI-5235340">
        <id>Q7Z699</id>
    </interactant>
    <interactant intactId="EBI-2679809">
        <id>Q12756</id>
        <label>KIF1A</label>
    </interactant>
    <organismsDiffer>false</organismsDiffer>
    <experiments>3</experiments>
</comment>
<comment type="interaction">
    <interactant intactId="EBI-5235340">
        <id>Q7Z699</id>
    </interactant>
    <interactant intactId="EBI-12197879">
        <id>O00139-1</id>
        <label>KIF2A</label>
    </interactant>
    <organismsDiffer>false</organismsDiffer>
    <experiments>3</experiments>
</comment>
<comment type="interaction">
    <interactant intactId="EBI-5235340">
        <id>Q7Z699</id>
    </interactant>
    <interactant intactId="EBI-714994">
        <id>Q99612</id>
        <label>KLF6</label>
    </interactant>
    <organismsDiffer>false</organismsDiffer>
    <experiments>3</experiments>
</comment>
<comment type="interaction">
    <interactant intactId="EBI-5235340">
        <id>Q7Z699</id>
    </interactant>
    <interactant intactId="EBI-714379">
        <id>Q9Y2M5</id>
        <label>KLHL20</label>
    </interactant>
    <organismsDiffer>false</organismsDiffer>
    <experiments>3</experiments>
</comment>
<comment type="interaction">
    <interactant intactId="EBI-5235340">
        <id>Q7Z699</id>
    </interactant>
    <interactant intactId="EBI-2805442">
        <id>Q9NPI7</id>
        <label>KRCC1</label>
    </interactant>
    <organismsDiffer>false</organismsDiffer>
    <experiments>3</experiments>
</comment>
<comment type="interaction">
    <interactant intactId="EBI-5235340">
        <id>Q7Z699</id>
    </interactant>
    <interactant intactId="EBI-1049638">
        <id>Q14525</id>
        <label>KRT33B</label>
    </interactant>
    <organismsDiffer>false</organismsDiffer>
    <experiments>3</experiments>
</comment>
<comment type="interaction">
    <interactant intactId="EBI-5235340">
        <id>Q7Z699</id>
    </interactant>
    <interactant intactId="EBI-10172290">
        <id>P60409</id>
        <label>KRTAP10-7</label>
    </interactant>
    <organismsDiffer>false</organismsDiffer>
    <experiments>3</experiments>
</comment>
<comment type="interaction">
    <interactant intactId="EBI-5235340">
        <id>Q7Z699</id>
    </interactant>
    <interactant intactId="EBI-10241252">
        <id>Q3SY46</id>
        <label>KRTAP13-3</label>
    </interactant>
    <organismsDiffer>false</organismsDiffer>
    <experiments>3</experiments>
</comment>
<comment type="interaction">
    <interactant intactId="EBI-5235340">
        <id>Q7Z699</id>
    </interactant>
    <interactant intactId="EBI-723416">
        <id>Q15012</id>
        <label>LAPTM4A</label>
    </interactant>
    <organismsDiffer>false</organismsDiffer>
    <experiments>3</experiments>
</comment>
<comment type="interaction">
    <interactant intactId="EBI-5235340">
        <id>Q7Z699</id>
    </interactant>
    <interactant intactId="EBI-749878">
        <id>Q8IYD9</id>
        <label>LAS2</label>
    </interactant>
    <organismsDiffer>false</organismsDiffer>
    <experiments>3</experiments>
</comment>
<comment type="interaction">
    <interactant intactId="EBI-5235340">
        <id>Q7Z699</id>
    </interactant>
    <interactant intactId="EBI-10246607">
        <id>Q5TA79</id>
        <label>LCE2A</label>
    </interactant>
    <organismsDiffer>false</organismsDiffer>
    <experiments>3</experiments>
</comment>
<comment type="interaction">
    <interactant intactId="EBI-5235340">
        <id>Q7Z699</id>
    </interactant>
    <interactant intactId="EBI-25835523">
        <id>Q9H2C1</id>
        <label>LHX5</label>
    </interactant>
    <organismsDiffer>false</organismsDiffer>
    <experiments>3</experiments>
</comment>
<comment type="interaction">
    <interactant intactId="EBI-5235340">
        <id>Q7Z699</id>
    </interactant>
    <interactant intactId="EBI-8474075">
        <id>Q68G74</id>
        <label>LHX8</label>
    </interactant>
    <organismsDiffer>false</organismsDiffer>
    <experiments>3</experiments>
</comment>
<comment type="interaction">
    <interactant intactId="EBI-5235340">
        <id>Q7Z699</id>
    </interactant>
    <interactant intactId="EBI-22000977">
        <id>Q7Z4I7-4</id>
        <label>LIMS2</label>
    </interactant>
    <organismsDiffer>false</organismsDiffer>
    <experiments>3</experiments>
</comment>
<comment type="interaction">
    <interactant intactId="EBI-5235340">
        <id>Q7Z699</id>
    </interactant>
    <interactant intactId="EBI-351935">
        <id>P02545</id>
        <label>LMNA</label>
    </interactant>
    <organismsDiffer>false</organismsDiffer>
    <experiments>3</experiments>
</comment>
<comment type="interaction">
    <interactant intactId="EBI-5235340">
        <id>Q7Z699</id>
    </interactant>
    <interactant intactId="EBI-739832">
        <id>Q8TBB1</id>
        <label>LNX1</label>
    </interactant>
    <organismsDiffer>false</organismsDiffer>
    <experiments>3</experiments>
</comment>
<comment type="interaction">
    <interactant intactId="EBI-5235340">
        <id>Q7Z699</id>
    </interactant>
    <interactant intactId="EBI-2340947">
        <id>Q8N448</id>
        <label>LNX2</label>
    </interactant>
    <organismsDiffer>false</organismsDiffer>
    <experiments>3</experiments>
</comment>
<comment type="interaction">
    <interactant intactId="EBI-5235340">
        <id>Q7Z699</id>
    </interactant>
    <interactant intactId="EBI-9088215">
        <id>A2RU56</id>
        <label>LOC401296</label>
    </interactant>
    <organismsDiffer>false</organismsDiffer>
    <experiments>3</experiments>
</comment>
<comment type="interaction">
    <interactant intactId="EBI-5235340">
        <id>Q7Z699</id>
    </interactant>
    <interactant intactId="EBI-2510853">
        <id>Q1L5Z9</id>
        <label>LONRF2</label>
    </interactant>
    <organismsDiffer>false</organismsDiffer>
    <experiments>3</experiments>
</comment>
<comment type="interaction">
    <interactant intactId="EBI-5235340">
        <id>Q7Z699</id>
    </interactant>
    <interactant intactId="EBI-749562">
        <id>Q96JB6</id>
        <label>LOXL4</label>
    </interactant>
    <organismsDiffer>false</organismsDiffer>
    <experiments>3</experiments>
</comment>
<comment type="interaction">
    <interactant intactId="EBI-5235340">
        <id>Q7Z699</id>
    </interactant>
    <interactant intactId="EBI-473747">
        <id>Q9NQ29</id>
        <label>LUC7L</label>
    </interactant>
    <organismsDiffer>false</organismsDiffer>
    <experiments>3</experiments>
</comment>
<comment type="interaction">
    <interactant intactId="EBI-5235340">
        <id>Q7Z699</id>
    </interactant>
    <interactant intactId="EBI-79452">
        <id>P07948</id>
        <label>LYN</label>
    </interactant>
    <organismsDiffer>false</organismsDiffer>
    <experiments>3</experiments>
</comment>
<comment type="interaction">
    <interactant intactId="EBI-5235340">
        <id>Q7Z699</id>
    </interactant>
    <interactant intactId="EBI-10268010">
        <id>Q8N8X9</id>
        <label>MAB21L3</label>
    </interactant>
    <organismsDiffer>false</organismsDiffer>
    <experiments>3</experiments>
</comment>
<comment type="interaction">
    <interactant intactId="EBI-5235340">
        <id>Q7Z699</id>
    </interactant>
    <interactant intactId="EBI-5651487">
        <id>Q9UBF1</id>
        <label>MAGEC2</label>
    </interactant>
    <organismsDiffer>false</organismsDiffer>
    <experiments>3</experiments>
</comment>
<comment type="interaction">
    <interactant intactId="EBI-5235340">
        <id>Q7Z699</id>
    </interactant>
    <interactant intactId="EBI-12056869">
        <id>Q9UDY8-2</id>
        <label>MALT1</label>
    </interactant>
    <organismsDiffer>false</organismsDiffer>
    <experiments>3</experiments>
</comment>
<comment type="interaction">
    <interactant intactId="EBI-5235340">
        <id>Q7Z699</id>
    </interactant>
    <interactant intactId="EBI-3911344">
        <id>P27338</id>
        <label>MAOB</label>
    </interactant>
    <organismsDiffer>false</organismsDiffer>
    <experiments>3</experiments>
</comment>
<comment type="interaction">
    <interactant intactId="EBI-5235340">
        <id>Q7Z699</id>
    </interactant>
    <interactant intactId="EBI-2341554">
        <id>Q8NA82</id>
        <label>MARCHF10</label>
    </interactant>
    <organismsDiffer>false</organismsDiffer>
    <experiments>3</experiments>
</comment>
<comment type="interaction">
    <interactant intactId="EBI-5235340">
        <id>Q7Z699</id>
    </interactant>
    <interactant intactId="EBI-2864512">
        <id>P50221</id>
        <label>MEOX1</label>
    </interactant>
    <organismsDiffer>false</organismsDiffer>
    <experiments>3</experiments>
</comment>
<comment type="interaction">
    <interactant intactId="EBI-5235340">
        <id>Q7Z699</id>
    </interactant>
    <interactant intactId="EBI-16439278">
        <id>Q6FHY5</id>
        <label>MEOX2</label>
    </interactant>
    <organismsDiffer>false</organismsDiffer>
    <experiments>3</experiments>
</comment>
<comment type="interaction">
    <interactant intactId="EBI-5235340">
        <id>Q7Z699</id>
    </interactant>
    <interactant intactId="EBI-21944954">
        <id>Q9BRJ9</id>
        <label>MESP1</label>
    </interactant>
    <organismsDiffer>false</organismsDiffer>
    <experiments>3</experiments>
</comment>
<comment type="interaction">
    <interactant intactId="EBI-5235340">
        <id>Q7Z699</id>
    </interactant>
    <interactant intactId="EBI-10174029">
        <id>A6NJ78-4</id>
        <label>METTL15</label>
    </interactant>
    <organismsDiffer>false</organismsDiffer>
    <experiments>3</experiments>
</comment>
<comment type="interaction">
    <interactant intactId="EBI-5235340">
        <id>Q7Z699</id>
    </interactant>
    <interactant intactId="EBI-2801965">
        <id>Q5JXC2</id>
        <label>MIIP</label>
    </interactant>
    <organismsDiffer>false</organismsDiffer>
    <experiments>3</experiments>
</comment>
<comment type="interaction">
    <interactant intactId="EBI-5235340">
        <id>Q7Z699</id>
    </interactant>
    <interactant intactId="EBI-9089845">
        <id>Q9UHC1-2</id>
        <label>MLH3</label>
    </interactant>
    <organismsDiffer>false</organismsDiffer>
    <experiments>3</experiments>
</comment>
<comment type="interaction">
    <interactant intactId="EBI-5235340">
        <id>Q7Z699</id>
    </interactant>
    <interactant intactId="EBI-25840143">
        <id>Q86VF5-3</id>
        <label>MOGAT3</label>
    </interactant>
    <organismsDiffer>false</organismsDiffer>
    <experiments>3</experiments>
</comment>
<comment type="interaction">
    <interactant intactId="EBI-5235340">
        <id>Q7Z699</id>
    </interactant>
    <interactant intactId="EBI-2512452">
        <id>Q8N594</id>
        <label>MPND</label>
    </interactant>
    <organismsDiffer>false</organismsDiffer>
    <experiments>3</experiments>
</comment>
<comment type="interaction">
    <interactant intactId="EBI-5235340">
        <id>Q7Z699</id>
    </interactant>
    <interactant intactId="EBI-995714">
        <id>Q9Y605</id>
        <label>MRFAP1</label>
    </interactant>
    <organismsDiffer>false</organismsDiffer>
    <experiments>3</experiments>
</comment>
<comment type="interaction">
    <interactant intactId="EBI-5235340">
        <id>Q7Z699</id>
    </interactant>
    <interactant intactId="EBI-10699187">
        <id>Q8IXL7-2</id>
        <label>MSRB3</label>
    </interactant>
    <organismsDiffer>false</organismsDiffer>
    <experiments>3</experiments>
</comment>
<comment type="interaction">
    <interactant intactId="EBI-5235340">
        <id>Q7Z699</id>
    </interactant>
    <interactant intactId="EBI-6447480">
        <id>P35548</id>
        <label>MSX2</label>
    </interactant>
    <organismsDiffer>false</organismsDiffer>
    <experiments>3</experiments>
</comment>
<comment type="interaction">
    <interactant intactId="EBI-5235340">
        <id>Q7Z699</id>
    </interactant>
    <interactant intactId="EBI-10698053">
        <id>Q9Y483-4</id>
        <label>MTF2</label>
    </interactant>
    <organismsDiffer>false</organismsDiffer>
    <experiments>3</experiments>
</comment>
<comment type="interaction">
    <interactant intactId="EBI-5235340">
        <id>Q7Z699</id>
    </interactant>
    <interactant intactId="EBI-6952711">
        <id>Q8WY64</id>
        <label>MYLIP</label>
    </interactant>
    <organismsDiffer>false</organismsDiffer>
    <experiments>3</experiments>
</comment>
<comment type="interaction">
    <interactant intactId="EBI-5235340">
        <id>Q7Z699</id>
    </interactant>
    <interactant intactId="EBI-12135485">
        <id>P41271-2</id>
        <label>NBL1</label>
    </interactant>
    <organismsDiffer>false</organismsDiffer>
    <experiments>3</experiments>
</comment>
<comment type="interaction">
    <interactant intactId="EBI-5235340">
        <id>Q7Z699</id>
    </interactant>
    <interactant intactId="EBI-749635">
        <id>P61601</id>
        <label>NCALD</label>
    </interactant>
    <organismsDiffer>false</organismsDiffer>
    <experiments>9</experiments>
</comment>
<comment type="interaction">
    <interactant intactId="EBI-5235340">
        <id>Q7Z699</id>
    </interactant>
    <interactant intactId="EBI-1237250">
        <id>P51970</id>
        <label>NDUFA8</label>
    </interactant>
    <organismsDiffer>false</organismsDiffer>
    <experiments>3</experiments>
</comment>
<comment type="interaction">
    <interactant intactId="EBI-5235340">
        <id>Q7Z699</id>
    </interactant>
    <interactant intactId="EBI-25930682">
        <id>O96000-2</id>
        <label>NDUFB10</label>
    </interactant>
    <organismsDiffer>false</organismsDiffer>
    <experiments>3</experiments>
</comment>
<comment type="interaction">
    <interactant intactId="EBI-5235340">
        <id>Q7Z699</id>
    </interactant>
    <interactant intactId="EBI-1246238">
        <id>P17568</id>
        <label>NDUFB7</label>
    </interactant>
    <organismsDiffer>false</organismsDiffer>
    <experiments>3</experiments>
</comment>
<comment type="interaction">
    <interactant intactId="EBI-5235340">
        <id>Q7Z699</id>
    </interactant>
    <interactant intactId="EBI-713665">
        <id>P19404</id>
        <label>NDUFV2</label>
    </interactant>
    <organismsDiffer>false</organismsDiffer>
    <experiments>3</experiments>
</comment>
<comment type="interaction">
    <interactant intactId="EBI-5235340">
        <id>Q7Z699</id>
    </interactant>
    <interactant intactId="EBI-2880203">
        <id>O76041</id>
        <label>NEBL</label>
    </interactant>
    <organismsDiffer>false</organismsDiffer>
    <experiments>3</experiments>
</comment>
<comment type="interaction">
    <interactant intactId="EBI-5235340">
        <id>Q7Z699</id>
    </interactant>
    <interactant intactId="EBI-536725">
        <id>Q8IXH7</id>
        <label>NELFCD</label>
    </interactant>
    <organismsDiffer>false</organismsDiffer>
    <experiments>3</experiments>
</comment>
<comment type="interaction">
    <interactant intactId="EBI-5235340">
        <id>Q7Z699</id>
    </interactant>
    <interactant intactId="EBI-25852289">
        <id>Q8NC67-2</id>
        <label>NETO2</label>
    </interactant>
    <organismsDiffer>false</organismsDiffer>
    <experiments>3</experiments>
</comment>
<comment type="interaction">
    <interactant intactId="EBI-5235340">
        <id>Q7Z699</id>
    </interactant>
    <interactant intactId="EBI-1172917">
        <id>P21359</id>
        <label>NF1</label>
    </interactant>
    <organismsDiffer>false</organismsDiffer>
    <experiments>6</experiments>
</comment>
<comment type="interaction">
    <interactant intactId="EBI-5235340">
        <id>Q7Z699</id>
    </interactant>
    <interactant intactId="EBI-726369">
        <id>Q16621</id>
        <label>NFE2</label>
    </interactant>
    <organismsDiffer>false</organismsDiffer>
    <experiments>3</experiments>
</comment>
<comment type="interaction">
    <interactant intactId="EBI-5235340">
        <id>Q7Z699</id>
    </interactant>
    <interactant intactId="EBI-352889">
        <id>Q15653</id>
        <label>NFKBIB</label>
    </interactant>
    <organismsDiffer>false</organismsDiffer>
    <experiments>3</experiments>
</comment>
<comment type="interaction">
    <interactant intactId="EBI-5235340">
        <id>Q7Z699</id>
    </interactant>
    <interactant intactId="EBI-2130062">
        <id>Q12986</id>
        <label>NFX1</label>
    </interactant>
    <organismsDiffer>false</organismsDiffer>
    <experiments>3</experiments>
</comment>
<comment type="interaction">
    <interactant intactId="EBI-5235340">
        <id>Q7Z699</id>
    </interactant>
    <interactant intactId="EBI-1387782">
        <id>P08138</id>
        <label>NGFR</label>
    </interactant>
    <organismsDiffer>false</organismsDiffer>
    <experiments>3</experiments>
</comment>
<comment type="interaction">
    <interactant intactId="EBI-5235340">
        <id>Q7Z699</id>
    </interactant>
    <interactant intactId="EBI-1051262">
        <id>Q9Y239</id>
        <label>NOD1</label>
    </interactant>
    <organismsDiffer>false</organismsDiffer>
    <experiments>3</experiments>
</comment>
<comment type="interaction">
    <interactant intactId="EBI-5235340">
        <id>Q7Z699</id>
    </interactant>
    <interactant intactId="EBI-740992">
        <id>O60936</id>
        <label>NOL3</label>
    </interactant>
    <organismsDiffer>false</organismsDiffer>
    <experiments>3</experiments>
</comment>
<comment type="interaction">
    <interactant intactId="EBI-5235340">
        <id>Q7Z699</id>
    </interactant>
    <interactant intactId="EBI-1391623">
        <id>P29474</id>
        <label>NOS3</label>
    </interactant>
    <organismsDiffer>false</organismsDiffer>
    <experiments>3</experiments>
</comment>
<comment type="interaction">
    <interactant intactId="EBI-5235340">
        <id>Q7Z699</id>
    </interactant>
    <interactant intactId="EBI-6144053">
        <id>Q14995</id>
        <label>NR1D2</label>
    </interactant>
    <organismsDiffer>false</organismsDiffer>
    <experiments>3</experiments>
</comment>
<comment type="interaction">
    <interactant intactId="EBI-5235340">
        <id>Q7Z699</id>
    </interactant>
    <interactant intactId="EBI-10177172">
        <id>F1D8P7</id>
        <label>NR1H2</label>
    </interactant>
    <organismsDiffer>false</organismsDiffer>
    <experiments>3</experiments>
</comment>
<comment type="interaction">
    <interactant intactId="EBI-5235340">
        <id>Q7Z699</id>
    </interactant>
    <interactant intactId="EBI-11952806">
        <id>Q13133-3</id>
        <label>NR1H3</label>
    </interactant>
    <organismsDiffer>false</organismsDiffer>
    <experiments>3</experiments>
</comment>
<comment type="interaction">
    <interactant intactId="EBI-5235340">
        <id>Q7Z699</id>
    </interactant>
    <interactant intactId="EBI-22002759">
        <id>Q9BZ95-3</id>
        <label>NSD3</label>
    </interactant>
    <organismsDiffer>false</organismsDiffer>
    <experiments>3</experiments>
</comment>
<comment type="interaction">
    <interactant intactId="EBI-5235340">
        <id>Q7Z699</id>
    </interactant>
    <interactant intactId="EBI-2557388">
        <id>Q96MF7</id>
        <label>NSMCE2</label>
    </interactant>
    <organismsDiffer>false</organismsDiffer>
    <experiments>3</experiments>
</comment>
<comment type="interaction">
    <interactant intactId="EBI-5235340">
        <id>Q7Z699</id>
    </interactant>
    <interactant intactId="EBI-25842707">
        <id>Q6X4W1-6</id>
        <label>NSMF</label>
    </interactant>
    <organismsDiffer>false</organismsDiffer>
    <experiments>3</experiments>
</comment>
<comment type="interaction">
    <interactant intactId="EBI-5235340">
        <id>Q7Z699</id>
    </interactant>
    <interactant intactId="EBI-1210753">
        <id>Q7Z417</id>
        <label>NUFIP2</label>
    </interactant>
    <organismsDiffer>false</organismsDiffer>
    <experiments>3</experiments>
</comment>
<comment type="interaction">
    <interactant intactId="EBI-5235340">
        <id>Q7Z699</id>
    </interactant>
    <interactant intactId="EBI-2562035">
        <id>Q5W0B1</id>
        <label>OBI1</label>
    </interactant>
    <organismsDiffer>false</organismsDiffer>
    <experiments>3</experiments>
</comment>
<comment type="interaction">
    <interactant intactId="EBI-5235340">
        <id>Q7Z699</id>
    </interactant>
    <interactant intactId="EBI-8466445">
        <id>A5D8V7</id>
        <label>ODAD3</label>
    </interactant>
    <organismsDiffer>false</organismsDiffer>
    <experiments>3</experiments>
</comment>
<comment type="interaction">
    <interactant intactId="EBI-5235340">
        <id>Q7Z699</id>
    </interactant>
    <interactant intactId="EBI-9090919">
        <id>Q5BJF6-2</id>
        <label>ODF2</label>
    </interactant>
    <organismsDiffer>false</organismsDiffer>
    <experiments>3</experiments>
</comment>
<comment type="interaction">
    <interactant intactId="EBI-5235340">
        <id>Q7Z699</id>
    </interactant>
    <interactant intactId="EBI-10225049">
        <id>Q7RTU3</id>
        <label>OLIG3</label>
    </interactant>
    <organismsDiffer>false</organismsDiffer>
    <experiments>3</experiments>
</comment>
<comment type="interaction">
    <interactant intactId="EBI-5235340">
        <id>Q7Z699</id>
    </interactant>
    <interactant intactId="EBI-1058491">
        <id>Q96FW1</id>
        <label>OTUB1</label>
    </interactant>
    <organismsDiffer>false</organismsDiffer>
    <experiments>3</experiments>
</comment>
<comment type="interaction">
    <interactant intactId="EBI-5235340">
        <id>Q7Z699</id>
    </interactant>
    <interactant intactId="EBI-25830200">
        <id>Q6GQQ9-2</id>
        <label>OTUD7B</label>
    </interactant>
    <organismsDiffer>false</organismsDiffer>
    <experiments>3</experiments>
</comment>
<comment type="interaction">
    <interactant intactId="EBI-5235340">
        <id>Q7Z699</id>
    </interactant>
    <interactant intactId="EBI-12149899">
        <id>Q8IVL6-2</id>
        <label>P3H3</label>
    </interactant>
    <organismsDiffer>false</organismsDiffer>
    <experiments>3</experiments>
</comment>
<comment type="interaction">
    <interactant intactId="EBI-5235340">
        <id>Q7Z699</id>
    </interactant>
    <interactant intactId="EBI-10694433">
        <id>Q8N7B6-2</id>
        <label>PACRGL</label>
    </interactant>
    <organismsDiffer>false</organismsDiffer>
    <experiments>3</experiments>
</comment>
<comment type="interaction">
    <interactant intactId="EBI-5235340">
        <id>Q7Z699</id>
    </interactant>
    <interactant intactId="EBI-6448827">
        <id>O75781</id>
        <label>PALM</label>
    </interactant>
    <organismsDiffer>false</organismsDiffer>
    <experiments>3</experiments>
</comment>
<comment type="interaction">
    <interactant intactId="EBI-5235340">
        <id>Q7Z699</id>
    </interactant>
    <interactant intactId="EBI-17159452">
        <id>Q9NR21-5</id>
        <label>PARP11</label>
    </interactant>
    <organismsDiffer>false</organismsDiffer>
    <experiments>3</experiments>
</comment>
<comment type="interaction">
    <interactant intactId="EBI-5235340">
        <id>Q7Z699</id>
    </interactant>
    <interactant intactId="EBI-3921217">
        <id>Q9HBI0</id>
        <label>PARVG</label>
    </interactant>
    <organismsDiffer>false</organismsDiffer>
    <experiments>3</experiments>
</comment>
<comment type="interaction">
    <interactant intactId="EBI-5235340">
        <id>Q7Z699</id>
    </interactant>
    <interactant intactId="EBI-22012354">
        <id>Q9BR81</id>
        <label>PCDHGC3</label>
    </interactant>
    <organismsDiffer>false</organismsDiffer>
    <experiments>3</experiments>
</comment>
<comment type="interaction">
    <interactant intactId="EBI-5235340">
        <id>Q7Z699</id>
    </interactant>
    <interactant intactId="EBI-12386584">
        <id>P22061-2</id>
        <label>PCMT1</label>
    </interactant>
    <organismsDiffer>false</organismsDiffer>
    <experiments>3</experiments>
</comment>
<comment type="interaction">
    <interactant intactId="EBI-5235340">
        <id>Q7Z699</id>
    </interactant>
    <interactant intactId="EBI-6309018">
        <id>Q9NV79</id>
        <label>PCMTD2</label>
    </interactant>
    <organismsDiffer>false</organismsDiffer>
    <experiments>3</experiments>
</comment>
<comment type="interaction">
    <interactant intactId="EBI-5235340">
        <id>Q7Z699</id>
    </interactant>
    <interactant intactId="EBI-12067280">
        <id>Q29RF7-3</id>
        <label>PDS5A</label>
    </interactant>
    <organismsDiffer>false</organismsDiffer>
    <experiments>3</experiments>
</comment>
<comment type="interaction">
    <interactant intactId="EBI-5235340">
        <id>Q7Z699</id>
    </interactant>
    <interactant intactId="EBI-2555365">
        <id>Q7RTV0</id>
        <label>PHF5A</label>
    </interactant>
    <organismsDiffer>false</organismsDiffer>
    <experiments>3</experiments>
</comment>
<comment type="interaction">
    <interactant intactId="EBI-5235340">
        <id>Q7Z699</id>
    </interactant>
    <interactant intactId="EBI-4307517">
        <id>Q9BWX1</id>
        <label>PHF7</label>
    </interactant>
    <organismsDiffer>false</organismsDiffer>
    <experiments>3</experiments>
</comment>
<comment type="interaction">
    <interactant intactId="EBI-5235340">
        <id>Q7Z699</id>
    </interactant>
    <interactant intactId="EBI-1642846">
        <id>P46019</id>
        <label>PHKA2</label>
    </interactant>
    <organismsDiffer>false</organismsDiffer>
    <experiments>3</experiments>
</comment>
<comment type="interaction">
    <interactant intactId="EBI-5235340">
        <id>Q7Z699</id>
    </interactant>
    <interactant intactId="EBI-629434">
        <id>O75925</id>
        <label>PIAS1</label>
    </interactant>
    <organismsDiffer>false</organismsDiffer>
    <experiments>3</experiments>
</comment>
<comment type="interaction">
    <interactant intactId="EBI-5235340">
        <id>Q7Z699</id>
    </interactant>
    <interactant intactId="EBI-10232538">
        <id>Q8WWB5</id>
        <label>PIH1D2</label>
    </interactant>
    <organismsDiffer>false</organismsDiffer>
    <experiments>8</experiments>
</comment>
<comment type="interaction">
    <interactant intactId="EBI-5235340">
        <id>Q7Z699</id>
    </interactant>
    <interactant intactId="EBI-346930">
        <id>O00459</id>
        <label>PIK3R2</label>
    </interactant>
    <organismsDiffer>false</organismsDiffer>
    <experiments>3</experiments>
</comment>
<comment type="interaction">
    <interactant intactId="EBI-5235340">
        <id>Q7Z699</id>
    </interactant>
    <interactant intactId="EBI-353408">
        <id>P14618</id>
        <label>PKM</label>
    </interactant>
    <organismsDiffer>false</organismsDiffer>
    <experiments>3</experiments>
</comment>
<comment type="interaction">
    <interactant intactId="EBI-5235340">
        <id>Q7Z699</id>
    </interactant>
    <interactant intactId="EBI-726466">
        <id>O15496</id>
        <label>PLA2G10</label>
    </interactant>
    <organismsDiffer>false</organismsDiffer>
    <experiments>3</experiments>
</comment>
<comment type="interaction">
    <interactant intactId="EBI-5235340">
        <id>Q7Z699</id>
    </interactant>
    <interactant intactId="EBI-11028203">
        <id>Q03405-2</id>
        <label>PLAUR</label>
    </interactant>
    <organismsDiffer>false</organismsDiffer>
    <experiments>3</experiments>
</comment>
<comment type="interaction">
    <interactant intactId="EBI-5235340">
        <id>Q7Z699</id>
    </interactant>
    <interactant intactId="EBI-12891828">
        <id>Q6ZR37</id>
        <label>PLEKHG7</label>
    </interactant>
    <organismsDiffer>false</organismsDiffer>
    <experiments>3</experiments>
</comment>
<comment type="interaction">
    <interactant intactId="EBI-5235340">
        <id>Q7Z699</id>
    </interactant>
    <interactant intactId="EBI-713832">
        <id>Q6P1K2</id>
        <label>PMF1</label>
    </interactant>
    <organismsDiffer>false</organismsDiffer>
    <experiments>3</experiments>
</comment>
<comment type="interaction">
    <interactant intactId="EBI-5235340">
        <id>Q7Z699</id>
    </interactant>
    <interactant intactId="EBI-12906008">
        <id>Q6P1K2-3</id>
        <label>PMF1</label>
    </interactant>
    <organismsDiffer>false</organismsDiffer>
    <experiments>3</experiments>
</comment>
<comment type="interaction">
    <interactant intactId="EBI-5235340">
        <id>Q7Z699</id>
    </interactant>
    <interactant intactId="EBI-78615">
        <id>Q07869</id>
        <label>PPARA</label>
    </interactant>
    <organismsDiffer>false</organismsDiffer>
    <experiments>3</experiments>
</comment>
<comment type="interaction">
    <interactant intactId="EBI-5235340">
        <id>Q7Z699</id>
    </interactant>
    <interactant intactId="EBI-10223258">
        <id>Q03181-2</id>
        <label>PPARD</label>
    </interactant>
    <organismsDiffer>false</organismsDiffer>
    <experiments>3</experiments>
</comment>
<comment type="interaction">
    <interactant intactId="EBI-5235340">
        <id>Q7Z699</id>
    </interactant>
    <interactant intactId="EBI-357253">
        <id>P62136</id>
        <label>PPP1CA</label>
    </interactant>
    <organismsDiffer>false</organismsDiffer>
    <experiments>4</experiments>
</comment>
<comment type="interaction">
    <interactant intactId="EBI-5235340">
        <id>Q7Z699</id>
    </interactant>
    <interactant intactId="EBI-352350">
        <id>P62140</id>
        <label>PPP1CB</label>
    </interactant>
    <organismsDiffer>false</organismsDiffer>
    <experiments>3</experiments>
</comment>
<comment type="interaction">
    <interactant intactId="EBI-5235340">
        <id>Q7Z699</id>
    </interactant>
    <interactant intactId="EBI-641666">
        <id>Q15172</id>
        <label>PPP2R5A</label>
    </interactant>
    <organismsDiffer>false</organismsDiffer>
    <experiments>3</experiments>
</comment>
<comment type="interaction">
    <interactant intactId="EBI-5235340">
        <id>Q7Z699</id>
    </interactant>
    <interactant intactId="EBI-9089276">
        <id>Q8NI37</id>
        <label>PPTC7</label>
    </interactant>
    <organismsDiffer>false</organismsDiffer>
    <experiments>3</experiments>
</comment>
<comment type="interaction">
    <interactant intactId="EBI-5235340">
        <id>Q7Z699</id>
    </interactant>
    <interactant intactId="EBI-850004">
        <id>P49643</id>
        <label>PRIM2</label>
    </interactant>
    <organismsDiffer>false</organismsDiffer>
    <experiments>3</experiments>
</comment>
<comment type="interaction">
    <interactant intactId="EBI-5235340">
        <id>Q7Z699</id>
    </interactant>
    <interactant intactId="EBI-1053424">
        <id>O43741</id>
        <label>PRKAB2</label>
    </interactant>
    <organismsDiffer>false</organismsDiffer>
    <experiments>3</experiments>
</comment>
<comment type="interaction">
    <interactant intactId="EBI-5235340">
        <id>Q7Z699</id>
    </interactant>
    <interactant intactId="EBI-21251460">
        <id>O60260-5</id>
        <label>PRKN</label>
    </interactant>
    <organismsDiffer>false</organismsDiffer>
    <experiments>3</experiments>
</comment>
<comment type="interaction">
    <interactant intactId="EBI-5235340">
        <id>Q7Z699</id>
    </interactant>
    <interactant intactId="EBI-2798416">
        <id>Q99633</id>
        <label>PRPF18</label>
    </interactant>
    <organismsDiffer>false</organismsDiffer>
    <experiments>3</experiments>
</comment>
<comment type="interaction">
    <interactant intactId="EBI-5235340">
        <id>Q7Z699</id>
    </interactant>
    <interactant intactId="EBI-8787485">
        <id>Q8IV56</id>
        <label>PRR15</label>
    </interactant>
    <organismsDiffer>false</organismsDiffer>
    <experiments>3</experiments>
</comment>
<comment type="interaction">
    <interactant intactId="EBI-5235340">
        <id>Q7Z699</id>
    </interactant>
    <interactant intactId="EBI-603329">
        <id>P40306</id>
        <label>PSMB10</label>
    </interactant>
    <organismsDiffer>false</organismsDiffer>
    <experiments>3</experiments>
</comment>
<comment type="interaction">
    <interactant intactId="EBI-5235340">
        <id>Q7Z699</id>
    </interactant>
    <interactant intactId="EBI-12255608">
        <id>Q9UKA9-2</id>
        <label>PTBP2</label>
    </interactant>
    <organismsDiffer>false</organismsDiffer>
    <experiments>3</experiments>
</comment>
<comment type="interaction">
    <interactant intactId="EBI-5235340">
        <id>Q7Z699</id>
    </interactant>
    <interactant intactId="EBI-25841978">
        <id>Q7Z7K5</id>
        <label>PXN</label>
    </interactant>
    <organismsDiffer>false</organismsDiffer>
    <experiments>3</experiments>
</comment>
<comment type="interaction">
    <interactant intactId="EBI-5235340">
        <id>Q7Z699</id>
    </interactant>
    <interactant intactId="EBI-722234">
        <id>Q15907</id>
        <label>RAB11B</label>
    </interactant>
    <organismsDiffer>false</organismsDiffer>
    <experiments>3</experiments>
</comment>
<comment type="interaction">
    <interactant intactId="EBI-5235340">
        <id>Q7Z699</id>
    </interactant>
    <interactant intactId="EBI-11984839">
        <id>Q96QF0-7</id>
        <label>RAB3IP</label>
    </interactant>
    <organismsDiffer>false</organismsDiffer>
    <experiments>3</experiments>
</comment>
<comment type="interaction">
    <interactant intactId="EBI-5235340">
        <id>Q7Z699</id>
    </interactant>
    <interactant intactId="EBI-286642">
        <id>P62826</id>
        <label>RAN</label>
    </interactant>
    <organismsDiffer>false</organismsDiffer>
    <experiments>3</experiments>
</comment>
<comment type="interaction">
    <interactant intactId="EBI-5235340">
        <id>Q7Z699</id>
    </interactant>
    <interactant intactId="EBI-438710">
        <id>Q9NS23-4</id>
        <label>RASSF1</label>
    </interactant>
    <organismsDiffer>false</organismsDiffer>
    <experiments>3</experiments>
</comment>
<comment type="interaction">
    <interactant intactId="EBI-5235340">
        <id>Q7Z699</id>
    </interactant>
    <interactant intactId="EBI-947779">
        <id>Q96PM5</id>
        <label>RCHY1</label>
    </interactant>
    <organismsDiffer>false</organismsDiffer>
    <experiments>3</experiments>
</comment>
<comment type="interaction">
    <interactant intactId="EBI-5235340">
        <id>Q7Z699</id>
    </interactant>
    <interactant intactId="EBI-21252376">
        <id>Q96PM5-4</id>
        <label>RCHY1</label>
    </interactant>
    <organismsDiffer>false</organismsDiffer>
    <experiments>3</experiments>
</comment>
<comment type="interaction">
    <interactant intactId="EBI-5235340">
        <id>Q7Z699</id>
    </interactant>
    <interactant intactId="EBI-948278">
        <id>Q15293</id>
        <label>RCN1</label>
    </interactant>
    <organismsDiffer>false</organismsDiffer>
    <experiments>3</experiments>
</comment>
<comment type="interaction">
    <interactant intactId="EBI-5235340">
        <id>Q7Z699</id>
    </interactant>
    <interactant intactId="EBI-1504830">
        <id>Q9P2K3-2</id>
        <label>RCOR3</label>
    </interactant>
    <organismsDiffer>false</organismsDiffer>
    <experiments>3</experiments>
</comment>
<comment type="interaction">
    <interactant intactId="EBI-5235340">
        <id>Q7Z699</id>
    </interactant>
    <interactant intactId="EBI-745810">
        <id>Q96EN9</id>
        <label>REX1BD</label>
    </interactant>
    <organismsDiffer>false</organismsDiffer>
    <experiments>3</experiments>
</comment>
<comment type="interaction">
    <interactant intactId="EBI-5235340">
        <id>Q7Z699</id>
    </interactant>
    <interactant intactId="EBI-25834767">
        <id>P47804-3</id>
        <label>RGR</label>
    </interactant>
    <organismsDiffer>false</organismsDiffer>
    <experiments>3</experiments>
</comment>
<comment type="interaction">
    <interactant intactId="EBI-5235340">
        <id>Q7Z699</id>
    </interactant>
    <interactant intactId="EBI-3918154">
        <id>Q9UGC6</id>
        <label>RGS17</label>
    </interactant>
    <organismsDiffer>false</organismsDiffer>
    <experiments>3</experiments>
</comment>
<comment type="interaction">
    <interactant intactId="EBI-5235340">
        <id>Q7Z699</id>
    </interactant>
    <interactant intactId="EBI-746555">
        <id>Q8TAI7</id>
        <label>RHEBL1</label>
    </interactant>
    <organismsDiffer>false</organismsDiffer>
    <experiments>3</experiments>
</comment>
<comment type="interaction">
    <interactant intactId="EBI-5235340">
        <id>Q7Z699</id>
    </interactant>
    <interactant intactId="EBI-6285694">
        <id>Q9H4E5</id>
        <label>RHOJ</label>
    </interactant>
    <organismsDiffer>false</organismsDiffer>
    <experiments>3</experiments>
</comment>
<comment type="interaction">
    <interactant intactId="EBI-5235340">
        <id>Q7Z699</id>
    </interactant>
    <interactant intactId="EBI-746325">
        <id>Q8TCX5</id>
        <label>RHPN1</label>
    </interactant>
    <organismsDiffer>false</organismsDiffer>
    <experiments>3</experiments>
</comment>
<comment type="interaction">
    <interactant intactId="EBI-5235340">
        <id>Q7Z699</id>
    </interactant>
    <interactant intactId="EBI-2856119">
        <id>Q96NA2</id>
        <label>RILP</label>
    </interactant>
    <organismsDiffer>false</organismsDiffer>
    <experiments>3</experiments>
</comment>
<comment type="interaction">
    <interactant intactId="EBI-5235340">
        <id>Q7Z699</id>
    </interactant>
    <interactant intactId="EBI-366017">
        <id>Q13671</id>
        <label>RIN1</label>
    </interactant>
    <organismsDiffer>false</organismsDiffer>
    <experiments>3</experiments>
</comment>
<comment type="interaction">
    <interactant intactId="EBI-5235340">
        <id>Q7Z699</id>
    </interactant>
    <interactant intactId="EBI-752313">
        <id>Q06587</id>
        <label>RING1</label>
    </interactant>
    <organismsDiffer>false</organismsDiffer>
    <experiments>3</experiments>
</comment>
<comment type="interaction">
    <interactant intactId="EBI-5235340">
        <id>Q7Z699</id>
    </interactant>
    <interactant intactId="EBI-10246897">
        <id>Q5TAB7</id>
        <label>RIPPLY2</label>
    </interactant>
    <organismsDiffer>false</organismsDiffer>
    <experiments>3</experiments>
</comment>
<comment type="interaction">
    <interactant intactId="EBI-5235340">
        <id>Q7Z699</id>
    </interactant>
    <interactant intactId="EBI-745055">
        <id>Q96G75</id>
        <label>RMND5B</label>
    </interactant>
    <organismsDiffer>false</organismsDiffer>
    <experiments>3</experiments>
</comment>
<comment type="interaction">
    <interactant intactId="EBI-5235340">
        <id>Q7Z699</id>
    </interactant>
    <interactant intactId="EBI-714023">
        <id>Q8N5U6</id>
        <label>RNF10</label>
    </interactant>
    <organismsDiffer>false</organismsDiffer>
    <experiments>3</experiments>
</comment>
<comment type="interaction">
    <interactant intactId="EBI-5235340">
        <id>Q7Z699</id>
    </interactant>
    <interactant intactId="EBI-749039">
        <id>Q8WVD3</id>
        <label>RNF138</label>
    </interactant>
    <organismsDiffer>false</organismsDiffer>
    <experiments>3</experiments>
</comment>
<comment type="interaction">
    <interactant intactId="EBI-5235340">
        <id>Q7Z699</id>
    </interactant>
    <interactant intactId="EBI-743938">
        <id>Q96D59</id>
        <label>RNF183</label>
    </interactant>
    <organismsDiffer>false</organismsDiffer>
    <experiments>3</experiments>
</comment>
<comment type="interaction">
    <interactant intactId="EBI-5235340">
        <id>Q7Z699</id>
    </interactant>
    <interactant intactId="EBI-751555">
        <id>Q9H0X6</id>
        <label>RNF208</label>
    </interactant>
    <organismsDiffer>false</organismsDiffer>
    <experiments>3</experiments>
</comment>
<comment type="interaction">
    <interactant intactId="EBI-5235340">
        <id>Q7Z699</id>
    </interactant>
    <interactant intactId="EBI-2340642">
        <id>Q969K3</id>
        <label>RNF34</label>
    </interactant>
    <organismsDiffer>false</organismsDiffer>
    <experiments>3</experiments>
</comment>
<comment type="interaction">
    <interactant intactId="EBI-5235340">
        <id>Q7Z699</id>
    </interactant>
    <interactant intactId="EBI-354303">
        <id>P62701</id>
        <label>RPS4X</label>
    </interactant>
    <organismsDiffer>false</organismsDiffer>
    <experiments>3</experiments>
</comment>
<comment type="interaction">
    <interactant intactId="EBI-5235340">
        <id>Q7Z699</id>
    </interactant>
    <interactant intactId="EBI-3922794">
        <id>Q9UJJ7</id>
        <label>RPUSD1</label>
    </interactant>
    <organismsDiffer>false</organismsDiffer>
    <experiments>3</experiments>
</comment>
<comment type="interaction">
    <interactant intactId="EBI-5235340">
        <id>Q7Z699</id>
    </interactant>
    <interactant intactId="EBI-12009390">
        <id>Q6UXX9-2</id>
        <label>RSPO2</label>
    </interactant>
    <organismsDiffer>false</organismsDiffer>
    <experiments>3</experiments>
</comment>
<comment type="interaction">
    <interactant intactId="EBI-5235340">
        <id>Q7Z699</id>
    </interactant>
    <interactant intactId="EBI-10181525">
        <id>Q6ZNE9</id>
        <label>RUFY4</label>
    </interactant>
    <organismsDiffer>false</organismsDiffer>
    <experiments>3</experiments>
</comment>
<comment type="interaction">
    <interactant intactId="EBI-5235340">
        <id>Q7Z699</id>
    </interactant>
    <interactant intactId="EBI-712405">
        <id>P48443</id>
        <label>RXRG</label>
    </interactant>
    <organismsDiffer>false</organismsDiffer>
    <experiments>3</experiments>
</comment>
<comment type="interaction">
    <interactant intactId="EBI-5235340">
        <id>Q7Z699</id>
    </interactant>
    <interactant intactId="EBI-752324">
        <id>Q8N488</id>
        <label>RYBP</label>
    </interactant>
    <organismsDiffer>false</organismsDiffer>
    <experiments>3</experiments>
</comment>
<comment type="interaction">
    <interactant intactId="EBI-5235340">
        <id>Q7Z699</id>
    </interactant>
    <interactant intactId="EBI-11528848">
        <id>Q8N6K7-2</id>
        <label>SAMD3</label>
    </interactant>
    <organismsDiffer>false</organismsDiffer>
    <experiments>3</experiments>
</comment>
<comment type="interaction">
    <interactant intactId="EBI-5235340">
        <id>Q7Z699</id>
    </interactant>
    <interactant intactId="EBI-25837959">
        <id>Q9BY12-3</id>
        <label>SCAPER</label>
    </interactant>
    <organismsDiffer>false</organismsDiffer>
    <experiments>3</experiments>
</comment>
<comment type="interaction">
    <interactant intactId="EBI-5235340">
        <id>Q7Z699</id>
    </interactant>
    <interactant intactId="EBI-748391">
        <id>Q9BWG6</id>
        <label>SCNM1</label>
    </interactant>
    <organismsDiffer>false</organismsDiffer>
    <experiments>3</experiments>
</comment>
<comment type="interaction">
    <interactant intactId="EBI-5235340">
        <id>Q7Z699</id>
    </interactant>
    <interactant intactId="EBI-1172957">
        <id>P34741</id>
        <label>SDC2</label>
    </interactant>
    <organismsDiffer>false</organismsDiffer>
    <experiments>3</experiments>
</comment>
<comment type="interaction">
    <interactant intactId="EBI-5235340">
        <id>Q7Z699</id>
    </interactant>
    <interactant intactId="EBI-727004">
        <id>O00560</id>
        <label>SDCBP</label>
    </interactant>
    <organismsDiffer>false</organismsDiffer>
    <experiments>3</experiments>
</comment>
<comment type="interaction">
    <interactant intactId="EBI-5235340">
        <id>Q7Z699</id>
    </interactant>
    <interactant intactId="EBI-8007671">
        <id>P16581</id>
        <label>SELE</label>
    </interactant>
    <organismsDiffer>false</organismsDiffer>
    <experiments>3</experiments>
</comment>
<comment type="interaction">
    <interactant intactId="EBI-5235340">
        <id>Q7Z699</id>
    </interactant>
    <interactant intactId="EBI-2880236">
        <id>Q9H4L4</id>
        <label>SENP3</label>
    </interactant>
    <organismsDiffer>false</organismsDiffer>
    <experiments>3</experiments>
</comment>
<comment type="interaction">
    <interactant intactId="EBI-5235340">
        <id>Q7Z699</id>
    </interactant>
    <interactant intactId="EBI-7481343">
        <id>Q01105-2</id>
        <label>SET</label>
    </interactant>
    <organismsDiffer>false</organismsDiffer>
    <experiments>3</experiments>
</comment>
<comment type="interaction">
    <interactant intactId="EBI-5235340">
        <id>Q7Z699</id>
    </interactant>
    <interactant intactId="EBI-22000547">
        <id>Q9NUL5-3</id>
        <label>SHFL</label>
    </interactant>
    <organismsDiffer>false</organismsDiffer>
    <experiments>3</experiments>
</comment>
<comment type="interaction">
    <interactant intactId="EBI-5235340">
        <id>Q7Z699</id>
    </interactant>
    <interactant intactId="EBI-2560428">
        <id>Q8IYI0</id>
        <label>SHLD1</label>
    </interactant>
    <organismsDiffer>false</organismsDiffer>
    <experiments>3</experiments>
</comment>
<comment type="interaction">
    <interactant intactId="EBI-5235340">
        <id>Q7Z699</id>
    </interactant>
    <interactant intactId="EBI-358545">
        <id>Q9GZS3</id>
        <label>SKIC8</label>
    </interactant>
    <organismsDiffer>false</organismsDiffer>
    <experiments>3</experiments>
</comment>
<comment type="interaction">
    <interactant intactId="EBI-5235340">
        <id>Q7Z699</id>
    </interactant>
    <interactant intactId="EBI-2902468">
        <id>P12757</id>
        <label>SKIL</label>
    </interactant>
    <organismsDiffer>false</organismsDiffer>
    <experiments>3</experiments>
</comment>
<comment type="interaction">
    <interactant intactId="EBI-5235340">
        <id>Q7Z699</id>
    </interactant>
    <interactant intactId="EBI-25930963">
        <id>P63208-2</id>
        <label>SKP1</label>
    </interactant>
    <organismsDiffer>false</organismsDiffer>
    <experiments>3</experiments>
</comment>
<comment type="interaction">
    <interactant intactId="EBI-5235340">
        <id>Q7Z699</id>
    </interactant>
    <interactant intactId="EBI-12898981">
        <id>Q6P1M0-2</id>
        <label>SLC27A4</label>
    </interactant>
    <organismsDiffer>false</organismsDiffer>
    <experiments>3</experiments>
</comment>
<comment type="interaction">
    <interactant intactId="EBI-5235340">
        <id>Q7Z699</id>
    </interactant>
    <interactant intactId="EBI-2822550">
        <id>Q8IYM2</id>
        <label>SLFN12</label>
    </interactant>
    <organismsDiffer>false</organismsDiffer>
    <experiments>3</experiments>
</comment>
<comment type="interaction">
    <interactant intactId="EBI-5235340">
        <id>Q7Z699</id>
    </interactant>
    <interactant intactId="EBI-358419">
        <id>Q12824</id>
        <label>SMARCB1</label>
    </interactant>
    <organismsDiffer>false</organismsDiffer>
    <experiments>3</experiments>
</comment>
<comment type="interaction">
    <interactant intactId="EBI-5235340">
        <id>Q7Z699</id>
    </interactant>
    <interactant intactId="EBI-373430">
        <id>Q96QK8</id>
        <label>SMIM14</label>
    </interactant>
    <organismsDiffer>false</organismsDiffer>
    <experiments>3</experiments>
</comment>
<comment type="interaction">
    <interactant intactId="EBI-5235340">
        <id>Q7Z699</id>
    </interactant>
    <interactant intactId="EBI-9845742">
        <id>Q9HCE7-2</id>
        <label>SMURF1</label>
    </interactant>
    <organismsDiffer>false</organismsDiffer>
    <experiments>3</experiments>
</comment>
<comment type="interaction">
    <interactant intactId="EBI-5235340">
        <id>Q7Z699</id>
    </interactant>
    <interactant intactId="EBI-12854506">
        <id>O60641-3</id>
        <label>SNAP91</label>
    </interactant>
    <organismsDiffer>false</organismsDiffer>
    <experiments>3</experiments>
</comment>
<comment type="interaction">
    <interactant intactId="EBI-5235340">
        <id>Q7Z699</id>
    </interactant>
    <interactant intactId="EBI-2876632">
        <id>Q6IEG0</id>
        <label>SNRNP48</label>
    </interactant>
    <organismsDiffer>false</organismsDiffer>
    <experiments>3</experiments>
</comment>
<comment type="interaction">
    <interactant intactId="EBI-5235340">
        <id>Q7Z699</id>
    </interactant>
    <interactant intactId="EBI-632715">
        <id>Q13573</id>
        <label>SNW1</label>
    </interactant>
    <organismsDiffer>false</organismsDiffer>
    <experiments>3</experiments>
</comment>
<comment type="interaction">
    <interactant intactId="EBI-5235340">
        <id>Q7Z699</id>
    </interactant>
    <interactant intactId="EBI-3942425">
        <id>Q8WXH5</id>
        <label>SOCS4</label>
    </interactant>
    <organismsDiffer>false</organismsDiffer>
    <experiments>3</experiments>
</comment>
<comment type="interaction">
    <interactant intactId="EBI-5235340">
        <id>Q7Z699</id>
    </interactant>
    <interactant intactId="EBI-25930989">
        <id>P35711-5</id>
        <label>SOX5</label>
    </interactant>
    <organismsDiffer>false</organismsDiffer>
    <experiments>3</experiments>
</comment>
<comment type="interaction">
    <interactant intactId="EBI-5235340">
        <id>Q7Z699</id>
    </interactant>
    <interactant intactId="EBI-11959123">
        <id>Q99932-2</id>
        <label>SPAG8</label>
    </interactant>
    <organismsDiffer>false</organismsDiffer>
    <experiments>3</experiments>
</comment>
<comment type="interaction">
    <interactant intactId="EBI-5235340">
        <id>Q7Z699</id>
    </interactant>
    <interactant intactId="EBI-12041693">
        <id>Q86W54-2</id>
        <label>SPATA24</label>
    </interactant>
    <organismsDiffer>false</organismsDiffer>
    <experiments>3</experiments>
</comment>
<comment type="interaction">
    <interactant intactId="EBI-5235340">
        <id>Q7Z699</id>
    </interactant>
    <interactant intactId="EBI-742688">
        <id>Q9NZD8</id>
        <label>SPG21</label>
    </interactant>
    <organismsDiffer>false</organismsDiffer>
    <experiments>3</experiments>
</comment>
<comment type="interaction">
    <interactant intactId="EBI-5235340">
        <id>Q7Z699</id>
    </interactant>
    <interactant intactId="EBI-7082156">
        <id>Q7Z698</id>
        <label>SPRED2</label>
    </interactant>
    <organismsDiffer>false</organismsDiffer>
    <experiments>3</experiments>
</comment>
<comment type="interaction">
    <interactant intactId="EBI-5235340">
        <id>Q7Z699</id>
    </interactant>
    <interactant intactId="EBI-354861">
        <id>Q9C004</id>
        <label>SPRY4</label>
    </interactant>
    <organismsDiffer>false</organismsDiffer>
    <experiments>3</experiments>
</comment>
<comment type="interaction">
    <interactant intactId="EBI-5235340">
        <id>Q7Z699</id>
    </interactant>
    <interactant intactId="EBI-18616594">
        <id>Q8IXS7</id>
        <label>SRGAP3</label>
    </interactant>
    <organismsDiffer>false</organismsDiffer>
    <experiments>3</experiments>
</comment>
<comment type="interaction">
    <interactant intactId="EBI-5235340">
        <id>Q7Z699</id>
    </interactant>
    <interactant intactId="EBI-2210673">
        <id>Q16385</id>
        <label>SSX2B</label>
    </interactant>
    <organismsDiffer>false</organismsDiffer>
    <experiments>3</experiments>
</comment>
<comment type="interaction">
    <interactant intactId="EBI-5235340">
        <id>Q7Z699</id>
    </interactant>
    <interactant intactId="EBI-863797">
        <id>Q9NRP7</id>
        <label>STK36</label>
    </interactant>
    <organismsDiffer>false</organismsDiffer>
    <experiments>3</experiments>
</comment>
<comment type="interaction">
    <interactant intactId="EBI-5235340">
        <id>Q7Z699</id>
    </interactant>
    <interactant intactId="EBI-22013242">
        <id>A1L378</id>
        <label>STRC</label>
    </interactant>
    <organismsDiffer>false</organismsDiffer>
    <experiments>3</experiments>
</comment>
<comment type="interaction">
    <interactant intactId="EBI-5235340">
        <id>Q7Z699</id>
    </interactant>
    <interactant intactId="EBI-357085">
        <id>Q9UNE7</id>
        <label>STUB1</label>
    </interactant>
    <organismsDiffer>false</organismsDiffer>
    <experiments>3</experiments>
</comment>
<comment type="interaction">
    <interactant intactId="EBI-5235340">
        <id>Q7Z699</id>
    </interactant>
    <interactant intactId="EBI-714135">
        <id>O75558</id>
        <label>STX11</label>
    </interactant>
    <organismsDiffer>false</organismsDiffer>
    <experiments>3</experiments>
</comment>
<comment type="interaction">
    <interactant intactId="EBI-5235340">
        <id>Q7Z699</id>
    </interactant>
    <interactant intactId="EBI-8484990">
        <id>Q8N4C7</id>
        <label>STX19</label>
    </interactant>
    <organismsDiffer>false</organismsDiffer>
    <experiments>3</experiments>
</comment>
<comment type="interaction">
    <interactant intactId="EBI-5235340">
        <id>Q7Z699</id>
    </interactant>
    <interactant intactId="EBI-473249">
        <id>O75528</id>
        <label>TADA3</label>
    </interactant>
    <organismsDiffer>false</organismsDiffer>
    <experiments>3</experiments>
</comment>
<comment type="interaction">
    <interactant intactId="EBI-5235340">
        <id>Q7Z699</id>
    </interactant>
    <interactant intactId="EBI-745958">
        <id>Q5VWN6</id>
        <label>TASOR2</label>
    </interactant>
    <organismsDiffer>false</organismsDiffer>
    <experiments>3</experiments>
</comment>
<comment type="interaction">
    <interactant intactId="EBI-5235340">
        <id>Q7Z699</id>
    </interactant>
    <interactant intactId="EBI-10314276">
        <id>Q9NUY8-2</id>
        <label>TBC1D23</label>
    </interactant>
    <organismsDiffer>false</organismsDiffer>
    <experiments>3</experiments>
</comment>
<comment type="interaction">
    <interactant intactId="EBI-5235340">
        <id>Q7Z699</id>
    </interactant>
    <interactant intactId="EBI-2116184">
        <id>Q8IYN2</id>
        <label>TCEAL8</label>
    </interactant>
    <organismsDiffer>false</organismsDiffer>
    <experiments>3</experiments>
</comment>
<comment type="interaction">
    <interactant intactId="EBI-5235340">
        <id>Q7Z699</id>
    </interactant>
    <interactant intactId="EBI-711018">
        <id>P54274-2</id>
        <label>TERF1</label>
    </interactant>
    <organismsDiffer>false</organismsDiffer>
    <experiments>3</experiments>
</comment>
<comment type="interaction">
    <interactant intactId="EBI-5235340">
        <id>Q7Z699</id>
    </interactant>
    <interactant intactId="EBI-2561654">
        <id>Q9UGI8</id>
        <label>TES</label>
    </interactant>
    <organismsDiffer>false</organismsDiffer>
    <experiments>3</experiments>
</comment>
<comment type="interaction">
    <interactant intactId="EBI-5235340">
        <id>Q7Z699</id>
    </interactant>
    <interactant intactId="EBI-12833746">
        <id>Q5T0J7-2</id>
        <label>TEX35</label>
    </interactant>
    <organismsDiffer>false</organismsDiffer>
    <experiments>3</experiments>
</comment>
<comment type="interaction">
    <interactant intactId="EBI-5235340">
        <id>Q7Z699</id>
    </interactant>
    <interactant intactId="EBI-25842075">
        <id>P21980-2</id>
        <label>TGM2</label>
    </interactant>
    <organismsDiffer>false</organismsDiffer>
    <experiments>3</experiments>
</comment>
<comment type="interaction">
    <interactant intactId="EBI-5235340">
        <id>Q7Z699</id>
    </interactant>
    <interactant intactId="EBI-7684443">
        <id>Q5T1C6</id>
        <label>THEM4</label>
    </interactant>
    <organismsDiffer>false</organismsDiffer>
    <experiments>3</experiments>
</comment>
<comment type="interaction">
    <interactant intactId="EBI-5235340">
        <id>Q7Z699</id>
    </interactant>
    <interactant intactId="EBI-1049822">
        <id>O60220</id>
        <label>TIMM8A</label>
    </interactant>
    <organismsDiffer>false</organismsDiffer>
    <experiments>3</experiments>
</comment>
<comment type="interaction">
    <interactant intactId="EBI-5235340">
        <id>Q7Z699</id>
    </interactant>
    <interactant intactId="EBI-2515360">
        <id>Q9BVW5</id>
        <label>TIPIN</label>
    </interactant>
    <organismsDiffer>false</organismsDiffer>
    <experiments>3</experiments>
</comment>
<comment type="interaction">
    <interactant intactId="EBI-5235340">
        <id>Q7Z699</id>
    </interactant>
    <interactant intactId="EBI-25830583">
        <id>Q8N0U2</id>
        <label>TMEM61</label>
    </interactant>
    <organismsDiffer>false</organismsDiffer>
    <experiments>3</experiments>
</comment>
<comment type="interaction">
    <interactant intactId="EBI-5235340">
        <id>Q7Z699</id>
    </interactant>
    <interactant intactId="EBI-25831574">
        <id>Q71RG4-4</id>
        <label>TMUB2</label>
    </interactant>
    <organismsDiffer>false</organismsDiffer>
    <experiments>3</experiments>
</comment>
<comment type="interaction">
    <interactant intactId="EBI-5235340">
        <id>Q7Z699</id>
    </interactant>
    <interactant intactId="EBI-2509913">
        <id>Q96KP6</id>
        <label>TNIP3</label>
    </interactant>
    <organismsDiffer>false</organismsDiffer>
    <experiments>3</experiments>
</comment>
<comment type="interaction">
    <interactant intactId="EBI-5235340">
        <id>Q7Z699</id>
    </interactant>
    <interactant intactId="EBI-396540">
        <id>Q12888</id>
        <label>TP53BP1</label>
    </interactant>
    <organismsDiffer>false</organismsDiffer>
    <experiments>3</experiments>
</comment>
<comment type="interaction">
    <interactant intactId="EBI-5235340">
        <id>Q7Z699</id>
    </interactant>
    <interactant intactId="EBI-523498">
        <id>O00463</id>
        <label>TRAF5</label>
    </interactant>
    <organismsDiffer>false</organismsDiffer>
    <experiments>3</experiments>
</comment>
<comment type="interaction">
    <interactant intactId="EBI-5235340">
        <id>Q7Z699</id>
    </interactant>
    <interactant intactId="EBI-947178">
        <id>Q92519</id>
        <label>TRIB2</label>
    </interactant>
    <organismsDiffer>false</organismsDiffer>
    <experiments>3</experiments>
</comment>
<comment type="interaction">
    <interactant intactId="EBI-5235340">
        <id>Q7Z699</id>
    </interactant>
    <interactant intactId="EBI-492476">
        <id>Q96RU7</id>
        <label>TRIB3</label>
    </interactant>
    <organismsDiffer>false</organismsDiffer>
    <experiments>4</experiments>
</comment>
<comment type="interaction">
    <interactant intactId="EBI-5235340">
        <id>Q7Z699</id>
    </interactant>
    <interactant intactId="EBI-17716262">
        <id>Q9UPQ4-2</id>
        <label>TRIM35</label>
    </interactant>
    <organismsDiffer>false</organismsDiffer>
    <experiments>3</experiments>
</comment>
<comment type="interaction">
    <interactant intactId="EBI-5235340">
        <id>Q7Z699</id>
    </interactant>
    <interactant intactId="EBI-5235829">
        <id>Q8IWZ5</id>
        <label>TRIM42</label>
    </interactant>
    <organismsDiffer>false</organismsDiffer>
    <experiments>3</experiments>
</comment>
<comment type="interaction">
    <interactant intactId="EBI-5235340">
        <id>Q7Z699</id>
    </interactant>
    <interactant intactId="EBI-11525489">
        <id>Q86WT6-2</id>
        <label>TRIM69</label>
    </interactant>
    <organismsDiffer>false</organismsDiffer>
    <experiments>3</experiments>
</comment>
<comment type="interaction">
    <interactant intactId="EBI-5235340">
        <id>Q7Z699</id>
    </interactant>
    <interactant intactId="EBI-10259086">
        <id>Q86UV6-2</id>
        <label>TRIM74</label>
    </interactant>
    <organismsDiffer>false</organismsDiffer>
    <experiments>3</experiments>
</comment>
<comment type="interaction">
    <interactant intactId="EBI-5235340">
        <id>Q7Z699</id>
    </interactant>
    <interactant intactId="EBI-25932209">
        <id>Q9H3H1-5</id>
        <label>TRIT1</label>
    </interactant>
    <organismsDiffer>false</organismsDiffer>
    <experiments>3</experiments>
</comment>
<comment type="interaction">
    <interactant intactId="EBI-5235340">
        <id>Q7Z699</id>
    </interactant>
    <interactant intactId="EBI-12806590">
        <id>Q86WV8</id>
        <label>TSC1</label>
    </interactant>
    <organismsDiffer>false</organismsDiffer>
    <experiments>3</experiments>
</comment>
<comment type="interaction">
    <interactant intactId="EBI-5235340">
        <id>Q7Z699</id>
    </interactant>
    <interactant intactId="EBI-21353855">
        <id>Q99598</id>
        <label>TSNAX</label>
    </interactant>
    <organismsDiffer>false</organismsDiffer>
    <experiments>3</experiments>
</comment>
<comment type="interaction">
    <interactant intactId="EBI-5235340">
        <id>Q7Z699</id>
    </interactant>
    <interactant intactId="EBI-9088812">
        <id>Q5VYS8-5</id>
        <label>TUT7</label>
    </interactant>
    <organismsDiffer>false</organismsDiffer>
    <experiments>3</experiments>
</comment>
<comment type="interaction">
    <interactant intactId="EBI-5235340">
        <id>Q7Z699</id>
    </interactant>
    <interactant intactId="EBI-594644">
        <id>P10599</id>
        <label>TXN</label>
    </interactant>
    <organismsDiffer>false</organismsDiffer>
    <experiments>3</experiments>
</comment>
<comment type="interaction">
    <interactant intactId="EBI-5235340">
        <id>Q7Z699</id>
    </interactant>
    <interactant intactId="EBI-25833730">
        <id>Q7Z780</id>
        <label>U2AF1</label>
    </interactant>
    <organismsDiffer>false</organismsDiffer>
    <experiments>3</experiments>
</comment>
<comment type="interaction">
    <interactant intactId="EBI-5235340">
        <id>Q7Z699</id>
    </interactant>
    <interactant intactId="EBI-711736">
        <id>Q8IWV7</id>
        <label>UBR1</label>
    </interactant>
    <organismsDiffer>false</organismsDiffer>
    <experiments>3</experiments>
</comment>
<comment type="interaction">
    <interactant intactId="EBI-5235340">
        <id>Q7Z699</id>
    </interactant>
    <interactant intactId="EBI-1995940">
        <id>Q5T4S7</id>
        <label>UBR4</label>
    </interactant>
    <organismsDiffer>false</organismsDiffer>
    <experiments>3</experiments>
</comment>
<comment type="interaction">
    <interactant intactId="EBI-5235340">
        <id>Q7Z699</id>
    </interactant>
    <interactant intactId="EBI-954554">
        <id>P15374</id>
        <label>UCHL3</label>
    </interactant>
    <organismsDiffer>false</organismsDiffer>
    <experiments>3</experiments>
</comment>
<comment type="interaction">
    <interactant intactId="EBI-5235340">
        <id>Q7Z699</id>
    </interactant>
    <interactant intactId="EBI-12041225">
        <id>Q9Y4E8-2</id>
        <label>USP15</label>
    </interactant>
    <organismsDiffer>false</organismsDiffer>
    <experiments>3</experiments>
</comment>
<comment type="interaction">
    <interactant intactId="EBI-5235340">
        <id>Q7Z699</id>
    </interactant>
    <interactant intactId="EBI-10696113">
        <id>O75604-3</id>
        <label>USP2</label>
    </interactant>
    <organismsDiffer>false</organismsDiffer>
    <experiments>3</experiments>
</comment>
<comment type="interaction">
    <interactant intactId="EBI-5235340">
        <id>Q7Z699</id>
    </interactant>
    <interactant intactId="EBI-11975223">
        <id>Q70EL1-9</id>
        <label>USP54</label>
    </interactant>
    <organismsDiffer>false</organismsDiffer>
    <experiments>3</experiments>
</comment>
<comment type="interaction">
    <interactant intactId="EBI-5235340">
        <id>Q7Z699</id>
    </interactant>
    <interactant intactId="EBI-10187996">
        <id>O75379-2</id>
        <label>VAMP4</label>
    </interactant>
    <organismsDiffer>false</organismsDiffer>
    <experiments>3</experiments>
</comment>
<comment type="interaction">
    <interactant intactId="EBI-5235340">
        <id>Q7Z699</id>
    </interactant>
    <interactant intactId="EBI-12157263">
        <id>P40337-2</id>
        <label>VHL</label>
    </interactant>
    <organismsDiffer>false</organismsDiffer>
    <experiments>3</experiments>
</comment>
<comment type="interaction">
    <interactant intactId="EBI-5235340">
        <id>Q7Z699</id>
    </interactant>
    <interactant intactId="EBI-373380">
        <id>Q9H270</id>
        <label>VPS11</label>
    </interactant>
    <organismsDiffer>false</organismsDiffer>
    <experiments>3</experiments>
</comment>
<comment type="interaction">
    <interactant intactId="EBI-5235340">
        <id>Q7Z699</id>
    </interactant>
    <interactant intactId="EBI-2850578">
        <id>Q8NEZ2</id>
        <label>VPS37A</label>
    </interactant>
    <organismsDiffer>false</organismsDiffer>
    <experiments>3</experiments>
</comment>
<comment type="interaction">
    <interactant intactId="EBI-5235340">
        <id>Q7Z699</id>
    </interactant>
    <interactant intactId="EBI-10270911">
        <id>Q8NEZ2-2</id>
        <label>VPS37A</label>
    </interactant>
    <organismsDiffer>false</organismsDiffer>
    <experiments>3</experiments>
</comment>
<comment type="interaction">
    <interactant intactId="EBI-5235340">
        <id>Q7Z699</id>
    </interactant>
    <interactant intactId="EBI-740943">
        <id>P62760</id>
        <label>VSNL1</label>
    </interactant>
    <organismsDiffer>false</organismsDiffer>
    <experiments>5</experiments>
</comment>
<comment type="interaction">
    <interactant intactId="EBI-5235340">
        <id>Q7Z699</id>
    </interactant>
    <interactant intactId="EBI-4290615">
        <id>Q9Y6W5</id>
        <label>WASF2</label>
    </interactant>
    <organismsDiffer>false</organismsDiffer>
    <experiments>3</experiments>
</comment>
<comment type="interaction">
    <interactant intactId="EBI-5235340">
        <id>Q7Z699</id>
    </interactant>
    <interactant intactId="EBI-7705033">
        <id>Q9BRX9</id>
        <label>WDR83</label>
    </interactant>
    <organismsDiffer>false</organismsDiffer>
    <experiments>3</experiments>
</comment>
<comment type="interaction">
    <interactant intactId="EBI-5235340">
        <id>Q7Z699</id>
    </interactant>
    <interactant intactId="EBI-12040603">
        <id>Q9NZC7-5</id>
        <label>WWOX</label>
    </interactant>
    <organismsDiffer>false</organismsDiffer>
    <experiments>3</experiments>
</comment>
<comment type="interaction">
    <interactant intactId="EBI-5235340">
        <id>Q7Z699</id>
    </interactant>
    <interactant intactId="EBI-12111538">
        <id>Q8IY57-5</id>
        <label>YAF2</label>
    </interactant>
    <organismsDiffer>false</organismsDiffer>
    <experiments>3</experiments>
</comment>
<comment type="interaction">
    <interactant intactId="EBI-5235340">
        <id>Q7Z699</id>
    </interactant>
    <interactant intactId="EBI-765538">
        <id>P25490</id>
        <label>YY1</label>
    </interactant>
    <organismsDiffer>false</organismsDiffer>
    <experiments>3</experiments>
</comment>
<comment type="interaction">
    <interactant intactId="EBI-5235340">
        <id>Q7Z699</id>
    </interactant>
    <interactant intactId="EBI-25842419">
        <id>O43167-2</id>
        <label>ZBTB24</label>
    </interactant>
    <organismsDiffer>false</organismsDiffer>
    <experiments>3</experiments>
</comment>
<comment type="interaction">
    <interactant intactId="EBI-5235340">
        <id>Q7Z699</id>
    </interactant>
    <interactant intactId="EBI-739899">
        <id>P24278</id>
        <label>ZBTB25</label>
    </interactant>
    <organismsDiffer>false</organismsDiffer>
    <experiments>3</experiments>
</comment>
<comment type="interaction">
    <interactant intactId="EBI-5235340">
        <id>Q7Z699</id>
    </interactant>
    <interactant intactId="EBI-25894765">
        <id>Q86WB0-2</id>
        <label>ZC3HC1</label>
    </interactant>
    <organismsDiffer>false</organismsDiffer>
    <experiments>3</experiments>
</comment>
<comment type="interaction">
    <interactant intactId="EBI-5235340">
        <id>Q7Z699</id>
    </interactant>
    <interactant intactId="EBI-524753">
        <id>Q8IUH5</id>
        <label>ZDHHC17</label>
    </interactant>
    <organismsDiffer>false</organismsDiffer>
    <experiments>3</experiments>
</comment>
<comment type="interaction">
    <interactant intactId="EBI-5235340">
        <id>Q7Z699</id>
    </interactant>
    <interactant intactId="EBI-7236323">
        <id>Q6ZN57</id>
        <label>ZFP2</label>
    </interactant>
    <organismsDiffer>false</organismsDiffer>
    <experiments>3</experiments>
</comment>
<comment type="interaction">
    <interactant intactId="EBI-5235340">
        <id>Q7Z699</id>
    </interactant>
    <interactant intactId="EBI-947213">
        <id>Q8WW38</id>
        <label>ZFPM2</label>
    </interactant>
    <organismsDiffer>false</organismsDiffer>
    <experiments>3</experiments>
</comment>
<comment type="interaction">
    <interactant intactId="EBI-5235340">
        <id>Q7Z699</id>
    </interactant>
    <interactant intactId="EBI-20857691">
        <id>Q3SY52</id>
        <label>ZIK1</label>
    </interactant>
    <organismsDiffer>false</organismsDiffer>
    <experiments>3</experiments>
</comment>
<comment type="interaction">
    <interactant intactId="EBI-5235340">
        <id>Q7Z699</id>
    </interactant>
    <interactant intactId="EBI-2876965">
        <id>Q9Y2L8</id>
        <label>ZKSCAN5</label>
    </interactant>
    <organismsDiffer>false</organismsDiffer>
    <experiments>3</experiments>
</comment>
<comment type="interaction">
    <interactant intactId="EBI-5235340">
        <id>Q7Z699</id>
    </interactant>
    <interactant intactId="EBI-2602314">
        <id>Q15776</id>
        <label>ZKSCAN8</label>
    </interactant>
    <organismsDiffer>false</organismsDiffer>
    <experiments>3</experiments>
</comment>
<comment type="interaction">
    <interactant intactId="EBI-5235340">
        <id>Q7Z699</id>
    </interactant>
    <interactant intactId="EBI-12030590">
        <id>Q9H0C1</id>
        <label>ZMYND12</label>
    </interactant>
    <organismsDiffer>false</organismsDiffer>
    <experiments>3</experiments>
</comment>
<comment type="interaction">
    <interactant intactId="EBI-5235340">
        <id>Q7Z699</id>
    </interactant>
    <interactant intactId="EBI-2555767">
        <id>Q15973</id>
        <label>ZNF124</label>
    </interactant>
    <organismsDiffer>false</organismsDiffer>
    <experiments>3</experiments>
</comment>
<comment type="interaction">
    <interactant intactId="EBI-5235340">
        <id>Q7Z699</id>
    </interactant>
    <interactant intactId="EBI-10746567">
        <id>P52744</id>
        <label>ZNF138</label>
    </interactant>
    <organismsDiffer>false</organismsDiffer>
    <experiments>3</experiments>
</comment>
<comment type="interaction">
    <interactant intactId="EBI-5235340">
        <id>Q7Z699</id>
    </interactant>
    <interactant intactId="EBI-741694">
        <id>P49910</id>
        <label>ZNF165</label>
    </interactant>
    <organismsDiffer>false</organismsDiffer>
    <experiments>3</experiments>
</comment>
<comment type="interaction">
    <interactant intactId="EBI-5235340">
        <id>Q7Z699</id>
    </interactant>
    <interactant intactId="EBI-12055755">
        <id>Q9UJW8-4</id>
        <label>ZNF180</label>
    </interactant>
    <organismsDiffer>false</organismsDiffer>
    <experiments>3</experiments>
</comment>
<comment type="interaction">
    <interactant intactId="EBI-5235340">
        <id>Q7Z699</id>
    </interactant>
    <interactant intactId="EBI-717634">
        <id>P17024</id>
        <label>ZNF20</label>
    </interactant>
    <organismsDiffer>false</organismsDiffer>
    <experiments>3</experiments>
</comment>
<comment type="interaction">
    <interactant intactId="EBI-5235340">
        <id>Q7Z699</id>
    </interactant>
    <interactant intactId="EBI-5657766">
        <id>P17027</id>
        <label>ZNF23</label>
    </interactant>
    <organismsDiffer>false</organismsDiffer>
    <experiments>3</experiments>
</comment>
<comment type="interaction">
    <interactant intactId="EBI-5235340">
        <id>Q7Z699</id>
    </interactant>
    <interactant intactId="EBI-8787052">
        <id>Q16600</id>
        <label>ZNF239</label>
    </interactant>
    <organismsDiffer>false</organismsDiffer>
    <experiments>3</experiments>
</comment>
<comment type="interaction">
    <interactant intactId="EBI-5235340">
        <id>Q7Z699</id>
    </interactant>
    <interactant intactId="EBI-707773">
        <id>P17028</id>
        <label>ZNF24</label>
    </interactant>
    <organismsDiffer>false</organismsDiffer>
    <experiments>3</experiments>
</comment>
<comment type="interaction">
    <interactant intactId="EBI-5235340">
        <id>Q7Z699</id>
    </interactant>
    <interactant intactId="EBI-10754950">
        <id>Q9HBT8</id>
        <label>ZNF286A</label>
    </interactant>
    <organismsDiffer>false</organismsDiffer>
    <experiments>3</experiments>
</comment>
<comment type="interaction">
    <interactant intactId="EBI-5235340">
        <id>Q7Z699</id>
    </interactant>
    <interactant intactId="EBI-25932668">
        <id>Q6P1L6-3</id>
        <label>ZNF343</label>
    </interactant>
    <organismsDiffer>false</organismsDiffer>
    <experiments>3</experiments>
</comment>
<comment type="interaction">
    <interactant intactId="EBI-5235340">
        <id>Q7Z699</id>
    </interactant>
    <interactant intactId="EBI-2818408">
        <id>Q14585</id>
        <label>ZNF345</label>
    </interactant>
    <organismsDiffer>false</organismsDiffer>
    <experiments>3</experiments>
</comment>
<comment type="interaction">
    <interactant intactId="EBI-5235340">
        <id>Q7Z699</id>
    </interactant>
    <interactant intactId="EBI-2813661">
        <id>Q8N895</id>
        <label>ZNF366</label>
    </interactant>
    <organismsDiffer>false</organismsDiffer>
    <experiments>3</experiments>
</comment>
<comment type="interaction">
    <interactant intactId="EBI-5235340">
        <id>Q7Z699</id>
    </interactant>
    <interactant intactId="EBI-347633">
        <id>Q9H9D4</id>
        <label>ZNF408</label>
    </interactant>
    <organismsDiffer>false</organismsDiffer>
    <experiments>3</experiments>
</comment>
<comment type="interaction">
    <interactant intactId="EBI-5235340">
        <id>Q7Z699</id>
    </interactant>
    <interactant intactId="EBI-744257">
        <id>Q96IQ9</id>
        <label>ZNF414</label>
    </interactant>
    <organismsDiffer>false</organismsDiffer>
    <experiments>3</experiments>
</comment>
<comment type="interaction">
    <interactant intactId="EBI-5235340">
        <id>Q7Z699</id>
    </interactant>
    <interactant intactId="EBI-740727">
        <id>Q8TAU3</id>
        <label>ZNF417</label>
    </interactant>
    <organismsDiffer>false</organismsDiffer>
    <experiments>3</experiments>
</comment>
<comment type="interaction">
    <interactant intactId="EBI-5235340">
        <id>Q7Z699</id>
    </interactant>
    <interactant intactId="EBI-8489702">
        <id>Q9C0F3</id>
        <label>ZNF436</label>
    </interactant>
    <organismsDiffer>false</organismsDiffer>
    <experiments>3</experiments>
</comment>
<comment type="interaction">
    <interactant intactId="EBI-5235340">
        <id>Q7Z699</id>
    </interactant>
    <interactant intactId="EBI-12010736">
        <id>Q8N0Y2-2</id>
        <label>ZNF444</label>
    </interactant>
    <organismsDiffer>false</organismsDiffer>
    <experiments>3</experiments>
</comment>
<comment type="interaction">
    <interactant intactId="EBI-5235340">
        <id>Q7Z699</id>
    </interactant>
    <interactant intactId="EBI-2555738">
        <id>Q14592</id>
        <label>ZNF460</label>
    </interactant>
    <organismsDiffer>false</organismsDiffer>
    <experiments>3</experiments>
</comment>
<comment type="interaction">
    <interactant intactId="EBI-5235340">
        <id>Q7Z699</id>
    </interactant>
    <interactant intactId="EBI-25831733">
        <id>Q96MN9-2</id>
        <label>ZNF488</label>
    </interactant>
    <organismsDiffer>false</organismsDiffer>
    <experiments>3</experiments>
</comment>
<comment type="interaction">
    <interactant intactId="EBI-5235340">
        <id>Q7Z699</id>
    </interactant>
    <interactant intactId="EBI-743906">
        <id>Q96IT1</id>
        <label>ZNF496</label>
    </interactant>
    <organismsDiffer>false</organismsDiffer>
    <experiments>3</experiments>
</comment>
<comment type="interaction">
    <interactant intactId="EBI-5235340">
        <id>Q7Z699</id>
    </interactant>
    <interactant intactId="EBI-10486136">
        <id>Q6ZNH5</id>
        <label>ZNF497</label>
    </interactant>
    <organismsDiffer>false</organismsDiffer>
    <experiments>3</experiments>
</comment>
<comment type="interaction">
    <interactant intactId="EBI-5235340">
        <id>Q7Z699</id>
    </interactant>
    <interactant intactId="EBI-18234077">
        <id>O60304</id>
        <label>ZNF500</label>
    </interactant>
    <organismsDiffer>false</organismsDiffer>
    <experiments>3</experiments>
</comment>
<comment type="interaction">
    <interactant intactId="EBI-5235340">
        <id>Q7Z699</id>
    </interactant>
    <interactant intactId="EBI-10283126">
        <id>Q96C55</id>
        <label>ZNF524</label>
    </interactant>
    <organismsDiffer>false</organismsDiffer>
    <experiments>3</experiments>
</comment>
<comment type="interaction">
    <interactant intactId="EBI-5235340">
        <id>Q7Z699</id>
    </interactant>
    <interactant intactId="EBI-2555762">
        <id>Q969W8</id>
        <label>ZNF566</label>
    </interactant>
    <organismsDiffer>false</organismsDiffer>
    <experiments>3</experiments>
</comment>
<comment type="interaction">
    <interactant intactId="EBI-5235340">
        <id>Q7Z699</id>
    </interactant>
    <interactant intactId="EBI-8490788">
        <id>Q68EA5</id>
        <label>ZNF57</label>
    </interactant>
    <organismsDiffer>false</organismsDiffer>
    <experiments>3</experiments>
</comment>
<comment type="interaction">
    <interactant intactId="EBI-5235340">
        <id>Q7Z699</id>
    </interactant>
    <interactant intactId="EBI-10172590">
        <id>Q7Z3I7</id>
        <label>ZNF572</label>
    </interactant>
    <organismsDiffer>false</organismsDiffer>
    <experiments>3</experiments>
</comment>
<comment type="interaction">
    <interactant intactId="EBI-5235340">
        <id>Q7Z699</id>
    </interactant>
    <interactant intactId="EBI-745520">
        <id>Q9P0T4</id>
        <label>ZNF581</label>
    </interactant>
    <organismsDiffer>false</organismsDiffer>
    <experiments>3</experiments>
</comment>
<comment type="interaction">
    <interactant intactId="EBI-5235340">
        <id>Q7Z699</id>
    </interactant>
    <interactant intactId="EBI-6427977">
        <id>Q96SQ5</id>
        <label>ZNF587</label>
    </interactant>
    <organismsDiffer>false</organismsDiffer>
    <experiments>3</experiments>
</comment>
<comment type="interaction">
    <interactant intactId="EBI-5235340">
        <id>Q7Z699</id>
    </interactant>
    <interactant intactId="EBI-9091553">
        <id>Q96LX8</id>
        <label>ZNF597</label>
    </interactant>
    <organismsDiffer>false</organismsDiffer>
    <experiments>3</experiments>
</comment>
<comment type="interaction">
    <interactant intactId="EBI-5235340">
        <id>Q7Z699</id>
    </interactant>
    <interactant intactId="EBI-25932974">
        <id>Q96SK3-3</id>
        <label>ZNF607</label>
    </interactant>
    <organismsDiffer>false</organismsDiffer>
    <experiments>3</experiments>
</comment>
<comment type="interaction">
    <interactant intactId="EBI-5235340">
        <id>Q7Z699</id>
    </interactant>
    <interactant intactId="EBI-12038525">
        <id>Q96I27-2</id>
        <label>ZNF625</label>
    </interactant>
    <organismsDiffer>false</organismsDiffer>
    <experiments>3</experiments>
</comment>
<comment type="interaction">
    <interactant intactId="EBI-5235340">
        <id>Q7Z699</id>
    </interactant>
    <interactant intactId="EBI-12939666">
        <id>Q96N77-2</id>
        <label>ZNF641</label>
    </interactant>
    <organismsDiffer>false</organismsDiffer>
    <experiments>3</experiments>
</comment>
<comment type="interaction">
    <interactant intactId="EBI-5235340">
        <id>Q7Z699</id>
    </interactant>
    <interactant intactId="EBI-4395789">
        <id>Q9BS31</id>
        <label>ZNF649</label>
    </interactant>
    <organismsDiffer>false</organismsDiffer>
    <experiments>3</experiments>
</comment>
<comment type="interaction">
    <interactant intactId="EBI-5235340">
        <id>Q7Z699</id>
    </interactant>
    <interactant intactId="EBI-625509">
        <id>Q8N720</id>
        <label>ZNF655</label>
    </interactant>
    <organismsDiffer>false</organismsDiffer>
    <experiments>3</experiments>
</comment>
<comment type="interaction">
    <interactant intactId="EBI-5235340">
        <id>Q7Z699</id>
    </interactant>
    <interactant intactId="EBI-745276">
        <id>Q9BS34</id>
        <label>ZNF670</label>
    </interactant>
    <organismsDiffer>false</organismsDiffer>
    <experiments>3</experiments>
</comment>
<comment type="interaction">
    <interactant intactId="EBI-5235340">
        <id>Q7Z699</id>
    </interactant>
    <interactant intactId="EBI-11090299">
        <id>Q9H7X3</id>
        <label>ZNF696</label>
    </interactant>
    <organismsDiffer>false</organismsDiffer>
    <experiments>3</experiments>
</comment>
<comment type="interaction">
    <interactant intactId="EBI-5235340">
        <id>Q7Z699</id>
    </interactant>
    <interactant intactId="EBI-10251462">
        <id>Q6NX45</id>
        <label>ZNF774</label>
    </interactant>
    <organismsDiffer>false</organismsDiffer>
    <experiments>3</experiments>
</comment>
<comment type="interaction">
    <interactant intactId="EBI-5235340">
        <id>Q7Z699</id>
    </interactant>
    <interactant intactId="EBI-18036029">
        <id>Q3KNS6-3</id>
        <label>ZNF829</label>
    </interactant>
    <organismsDiffer>false</organismsDiffer>
    <experiments>3</experiments>
</comment>
<comment type="interaction">
    <interactant intactId="EBI-5235340">
        <id>Q7Z699</id>
    </interactant>
    <interactant intactId="EBI-1210440">
        <id>O43309</id>
        <label>ZSCAN12</label>
    </interactant>
    <organismsDiffer>false</organismsDiffer>
    <experiments>3</experiments>
</comment>
<comment type="interaction">
    <interactant intactId="EBI-5235340">
        <id>Q7Z699</id>
    </interactant>
    <interactant intactId="EBI-723596">
        <id>Q9H4T2</id>
        <label>ZSCAN16</label>
    </interactant>
    <organismsDiffer>false</organismsDiffer>
    <experiments>3</experiments>
</comment>
<comment type="interaction">
    <interactant intactId="EBI-5235340">
        <id>Q7Z699</id>
    </interactant>
    <interactant intactId="EBI-10178224">
        <id>P10073</id>
        <label>ZSCAN22</label>
    </interactant>
    <organismsDiffer>false</organismsDiffer>
    <experiments>3</experiments>
</comment>
<comment type="interaction">
    <interactant intactId="EBI-5235340">
        <id>Q7Z699</id>
    </interactant>
    <interactant intactId="EBI-25932549">
        <id>Q96LW9-2</id>
        <label>ZSCAN31</label>
    </interactant>
    <organismsDiffer>false</organismsDiffer>
    <experiments>3</experiments>
</comment>
<comment type="interaction">
    <interactant intactId="EBI-5235340">
        <id>Q7Z699</id>
    </interactant>
    <interactant intactId="EBI-751531">
        <id>O15535</id>
        <label>ZSCAN9</label>
    </interactant>
    <organismsDiffer>false</organismsDiffer>
    <experiments>3</experiments>
</comment>
<comment type="interaction">
    <interactant intactId="EBI-5235340">
        <id>Q7Z699</id>
    </interactant>
    <interactant intactId="EBI-25831943">
        <id>Q7L8T7</id>
    </interactant>
    <organismsDiffer>false</organismsDiffer>
    <experiments>3</experiments>
</comment>
<comment type="interaction">
    <interactant intactId="EBI-5235340">
        <id>Q7Z699</id>
    </interactant>
    <interactant intactId="EBI-9088990">
        <id>Q7Z783</id>
    </interactant>
    <organismsDiffer>false</organismsDiffer>
    <experiments>3</experiments>
</comment>
<comment type="interaction">
    <interactant intactId="EBI-5235340">
        <id>Q7Z699</id>
    </interactant>
    <interactant intactId="EBI-10259496">
        <id>Q86V28</id>
    </interactant>
    <organismsDiffer>false</organismsDiffer>
    <experiments>3</experiments>
</comment>
<comment type="interaction">
    <interactant intactId="EBI-5235340">
        <id>Q7Z699</id>
    </interactant>
    <interactant intactId="EBI-25933855">
        <id>Q96FU4</id>
    </interactant>
    <organismsDiffer>false</organismsDiffer>
    <experiments>3</experiments>
</comment>
<comment type="subcellular location">
    <subcellularLocation>
        <location evidence="8">Cell membrane</location>
        <topology evidence="8">Peripheral membrane protein</topology>
    </subcellularLocation>
    <subcellularLocation>
        <location evidence="8">Membrane</location>
        <location evidence="8">Caveola</location>
        <topology evidence="8">Peripheral membrane protein</topology>
    </subcellularLocation>
    <subcellularLocation>
        <location evidence="8">Nucleus</location>
    </subcellularLocation>
    <text>Localized in cholesterol-rich membrane raft/caveola fractions.</text>
</comment>
<comment type="tissue specificity">
    <text evidence="6">Weakly expressed in embryonic cell line HEK293.</text>
</comment>
<comment type="PTM">
    <text evidence="1">Palmitoylated by ZDHHC17/HIP14.</text>
</comment>
<comment type="PTM">
    <text evidence="9">Phosphorylated on tyrosine.</text>
</comment>
<comment type="PTM">
    <text evidence="9">Ubiquitinated.</text>
</comment>
<comment type="disease" evidence="10 12 13 14">
    <disease id="DI-02046">
        <name>Legius syndrome</name>
        <acronym>LGSS</acronym>
        <description>An autosomal dominant syndrome characterized mainly by cafe-au-lait macules without neurofibromas or other tumor manifestations of neurofibromatosis type 1, axillary freckling, and macrocephaly. Additional clinical manifestations include Noonan-like facial dysmorphism, lipomas, learning disabilities, and features of attention deficit-hyperactivity disorder.</description>
        <dbReference type="MIM" id="611431"/>
    </disease>
    <text>The disease is caused by variants affecting the gene represented in this entry.</text>
</comment>
<comment type="sequence caution" evidence="16">
    <conflict type="miscellaneous discrepancy">
        <sequence resource="EMBL-CDS" id="AAH18015"/>
    </conflict>
    <text>Contaminating sequence. Potential poly-A sequence.</text>
</comment>
<proteinExistence type="evidence at protein level"/>
<reference key="1">
    <citation type="journal article" date="2005" name="Biochem. J.">
        <title>Distinct requirements for the Sprouty domain for functional activity of Spred proteins.</title>
        <authorList>
            <person name="King J.A.J."/>
            <person name="Straffon A.F.L."/>
            <person name="D'Abaco G.M."/>
            <person name="Poon C.L.C."/>
            <person name="I S.T.T."/>
            <person name="Smith C.M."/>
            <person name="Buchert M."/>
            <person name="Corcoran N.M."/>
            <person name="Hall N.E."/>
            <person name="Callus B.A."/>
            <person name="Sarcevic B."/>
            <person name="Martin D."/>
            <person name="Lock P."/>
            <person name="Hovens C.M."/>
        </authorList>
    </citation>
    <scope>NUCLEOTIDE SEQUENCE [MRNA]</scope>
    <scope>INTERACTION WITH SPRED2</scope>
    <source>
        <tissue>Glioblastoma</tissue>
    </source>
</reference>
<reference key="2">
    <citation type="journal article" date="2004" name="Nat. Genet.">
        <title>Complete sequencing and characterization of 21,243 full-length human cDNAs.</title>
        <authorList>
            <person name="Ota T."/>
            <person name="Suzuki Y."/>
            <person name="Nishikawa T."/>
            <person name="Otsuki T."/>
            <person name="Sugiyama T."/>
            <person name="Irie R."/>
            <person name="Wakamatsu A."/>
            <person name="Hayashi K."/>
            <person name="Sato H."/>
            <person name="Nagai K."/>
            <person name="Kimura K."/>
            <person name="Makita H."/>
            <person name="Sekine M."/>
            <person name="Obayashi M."/>
            <person name="Nishi T."/>
            <person name="Shibahara T."/>
            <person name="Tanaka T."/>
            <person name="Ishii S."/>
            <person name="Yamamoto J."/>
            <person name="Saito K."/>
            <person name="Kawai Y."/>
            <person name="Isono Y."/>
            <person name="Nakamura Y."/>
            <person name="Nagahari K."/>
            <person name="Murakami K."/>
            <person name="Yasuda T."/>
            <person name="Iwayanagi T."/>
            <person name="Wagatsuma M."/>
            <person name="Shiratori A."/>
            <person name="Sudo H."/>
            <person name="Hosoiri T."/>
            <person name="Kaku Y."/>
            <person name="Kodaira H."/>
            <person name="Kondo H."/>
            <person name="Sugawara M."/>
            <person name="Takahashi M."/>
            <person name="Kanda K."/>
            <person name="Yokoi T."/>
            <person name="Furuya T."/>
            <person name="Kikkawa E."/>
            <person name="Omura Y."/>
            <person name="Abe K."/>
            <person name="Kamihara K."/>
            <person name="Katsuta N."/>
            <person name="Sato K."/>
            <person name="Tanikawa M."/>
            <person name="Yamazaki M."/>
            <person name="Ninomiya K."/>
            <person name="Ishibashi T."/>
            <person name="Yamashita H."/>
            <person name="Murakawa K."/>
            <person name="Fujimori K."/>
            <person name="Tanai H."/>
            <person name="Kimata M."/>
            <person name="Watanabe M."/>
            <person name="Hiraoka S."/>
            <person name="Chiba Y."/>
            <person name="Ishida S."/>
            <person name="Ono Y."/>
            <person name="Takiguchi S."/>
            <person name="Watanabe S."/>
            <person name="Yosida M."/>
            <person name="Hotuta T."/>
            <person name="Kusano J."/>
            <person name="Kanehori K."/>
            <person name="Takahashi-Fujii A."/>
            <person name="Hara H."/>
            <person name="Tanase T.-O."/>
            <person name="Nomura Y."/>
            <person name="Togiya S."/>
            <person name="Komai F."/>
            <person name="Hara R."/>
            <person name="Takeuchi K."/>
            <person name="Arita M."/>
            <person name="Imose N."/>
            <person name="Musashino K."/>
            <person name="Yuuki H."/>
            <person name="Oshima A."/>
            <person name="Sasaki N."/>
            <person name="Aotsuka S."/>
            <person name="Yoshikawa Y."/>
            <person name="Matsunawa H."/>
            <person name="Ichihara T."/>
            <person name="Shiohata N."/>
            <person name="Sano S."/>
            <person name="Moriya S."/>
            <person name="Momiyama H."/>
            <person name="Satoh N."/>
            <person name="Takami S."/>
            <person name="Terashima Y."/>
            <person name="Suzuki O."/>
            <person name="Nakagawa S."/>
            <person name="Senoh A."/>
            <person name="Mizoguchi H."/>
            <person name="Goto Y."/>
            <person name="Shimizu F."/>
            <person name="Wakebe H."/>
            <person name="Hishigaki H."/>
            <person name="Watanabe T."/>
            <person name="Sugiyama A."/>
            <person name="Takemoto M."/>
            <person name="Kawakami B."/>
            <person name="Yamazaki M."/>
            <person name="Watanabe K."/>
            <person name="Kumagai A."/>
            <person name="Itakura S."/>
            <person name="Fukuzumi Y."/>
            <person name="Fujimori Y."/>
            <person name="Komiyama M."/>
            <person name="Tashiro H."/>
            <person name="Tanigami A."/>
            <person name="Fujiwara T."/>
            <person name="Ono T."/>
            <person name="Yamada K."/>
            <person name="Fujii Y."/>
            <person name="Ozaki K."/>
            <person name="Hirao M."/>
            <person name="Ohmori Y."/>
            <person name="Kawabata A."/>
            <person name="Hikiji T."/>
            <person name="Kobatake N."/>
            <person name="Inagaki H."/>
            <person name="Ikema Y."/>
            <person name="Okamoto S."/>
            <person name="Okitani R."/>
            <person name="Kawakami T."/>
            <person name="Noguchi S."/>
            <person name="Itoh T."/>
            <person name="Shigeta K."/>
            <person name="Senba T."/>
            <person name="Matsumura K."/>
            <person name="Nakajima Y."/>
            <person name="Mizuno T."/>
            <person name="Morinaga M."/>
            <person name="Sasaki M."/>
            <person name="Togashi T."/>
            <person name="Oyama M."/>
            <person name="Hata H."/>
            <person name="Watanabe M."/>
            <person name="Komatsu T."/>
            <person name="Mizushima-Sugano J."/>
            <person name="Satoh T."/>
            <person name="Shirai Y."/>
            <person name="Takahashi Y."/>
            <person name="Nakagawa K."/>
            <person name="Okumura K."/>
            <person name="Nagase T."/>
            <person name="Nomura N."/>
            <person name="Kikuchi H."/>
            <person name="Masuho Y."/>
            <person name="Yamashita R."/>
            <person name="Nakai K."/>
            <person name="Yada T."/>
            <person name="Nakamura Y."/>
            <person name="Ohara O."/>
            <person name="Isogai T."/>
            <person name="Sugano S."/>
        </authorList>
    </citation>
    <scope>NUCLEOTIDE SEQUENCE [LARGE SCALE MRNA]</scope>
    <source>
        <tissue>Tongue</tissue>
    </source>
</reference>
<reference key="3">
    <citation type="submission" date="2005-07" db="EMBL/GenBank/DDBJ databases">
        <authorList>
            <person name="Mural R.J."/>
            <person name="Istrail S."/>
            <person name="Sutton G.G."/>
            <person name="Florea L."/>
            <person name="Halpern A.L."/>
            <person name="Mobarry C.M."/>
            <person name="Lippert R."/>
            <person name="Walenz B."/>
            <person name="Shatkay H."/>
            <person name="Dew I."/>
            <person name="Miller J.R."/>
            <person name="Flanigan M.J."/>
            <person name="Edwards N.J."/>
            <person name="Bolanos R."/>
            <person name="Fasulo D."/>
            <person name="Halldorsson B.V."/>
            <person name="Hannenhalli S."/>
            <person name="Turner R."/>
            <person name="Yooseph S."/>
            <person name="Lu F."/>
            <person name="Nusskern D.R."/>
            <person name="Shue B.C."/>
            <person name="Zheng X.H."/>
            <person name="Zhong F."/>
            <person name="Delcher A.L."/>
            <person name="Huson D.H."/>
            <person name="Kravitz S.A."/>
            <person name="Mouchard L."/>
            <person name="Reinert K."/>
            <person name="Remington K.A."/>
            <person name="Clark A.G."/>
            <person name="Waterman M.S."/>
            <person name="Eichler E.E."/>
            <person name="Adams M.D."/>
            <person name="Hunkapiller M.W."/>
            <person name="Myers E.W."/>
            <person name="Venter J.C."/>
        </authorList>
    </citation>
    <scope>NUCLEOTIDE SEQUENCE [LARGE SCALE GENOMIC DNA]</scope>
</reference>
<reference key="4">
    <citation type="journal article" date="2004" name="Genome Res.">
        <title>The status, quality, and expansion of the NIH full-length cDNA project: the Mammalian Gene Collection (MGC).</title>
        <authorList>
            <consortium name="The MGC Project Team"/>
        </authorList>
    </citation>
    <scope>NUCLEOTIDE SEQUENCE [LARGE SCALE MRNA]</scope>
    <source>
        <tissue>Brain</tissue>
    </source>
</reference>
<reference key="5">
    <citation type="journal article" date="2004" name="Histochem. Cell Biol.">
        <title>Expression and subcellular localization of Spred proteins in mouse and human tissues.</title>
        <authorList>
            <person name="Engelhardt C.M."/>
            <person name="Bundschu K."/>
            <person name="Messerschmitt M."/>
            <person name="Renne T."/>
            <person name="Walter U."/>
            <person name="Reinhard M."/>
            <person name="Schuh K."/>
        </authorList>
    </citation>
    <scope>TISSUE SPECIFICITY</scope>
</reference>
<reference key="6">
    <citation type="journal article" date="2005" name="Genes Cells">
        <title>The Sprouty-related protein, Spred-1, localizes in a lipid raft/caveola and inhibits ERK activation in collaboration with caveolin-1.</title>
        <authorList>
            <person name="Nonami A."/>
            <person name="Taketomi T."/>
            <person name="Kimura A."/>
            <person name="Saeki K."/>
            <person name="Takaki H."/>
            <person name="Sanada T."/>
            <person name="Taniguchi K."/>
            <person name="Harada M."/>
            <person name="Kato R."/>
            <person name="Yoshimura A."/>
        </authorList>
    </citation>
    <scope>INTERACTION WITH CAV1</scope>
    <scope>SUBCELLULAR LOCATION</scope>
</reference>
<reference key="7">
    <citation type="journal article" date="2006" name="Biochem. Biophys. Res. Commun.">
        <title>Spred-2 steady-state levels are regulated by phosphorylation and Cbl-mediated ubiquitination.</title>
        <authorList>
            <person name="Lock P."/>
            <person name="I S.T.T."/>
            <person name="Straffon A.F."/>
            <person name="Schieb H."/>
            <person name="Hovens C.M."/>
            <person name="Stylli S.S."/>
        </authorList>
    </citation>
    <scope>PHOSPHORYLATION</scope>
    <scope>UBIQUITINATION</scope>
</reference>
<reference key="8">
    <citation type="journal article" date="2007" name="Nat. Genet.">
        <title>Germline loss-of-function mutations in SPRED1 cause a neurofibromatosis 1-like phenotype.</title>
        <authorList>
            <person name="Brems H."/>
            <person name="Chmara M."/>
            <person name="Sahbatou M."/>
            <person name="Denayer E."/>
            <person name="Taniguchi K."/>
            <person name="Kato R."/>
            <person name="Somers R."/>
            <person name="Messiaen L."/>
            <person name="De Schepper S."/>
            <person name="Fryns J.-P."/>
            <person name="Cools J."/>
            <person name="Marynen P."/>
            <person name="Thomas G."/>
            <person name="Yoshimura A."/>
            <person name="Legius E."/>
        </authorList>
    </citation>
    <scope>INVOLVEMENT IN LGSS</scope>
</reference>
<reference key="9">
    <citation type="journal article" date="2008" name="Mol. Biol. Cell">
        <title>Spred1 and TESK1--two new interaction partners of the kinase MARKK/TAO1 that link the microtubule and actin cytoskeleton.</title>
        <authorList>
            <person name="Johne C."/>
            <person name="Matenia D."/>
            <person name="Li X.Y."/>
            <person name="Timm T."/>
            <person name="Balusamy K."/>
            <person name="Mandelkow E.M."/>
        </authorList>
    </citation>
    <scope>FUNCTION</scope>
    <scope>INTERACTION WITH TESK1 AND TAOK1</scope>
</reference>
<reference key="10">
    <citation type="journal article" date="2012" name="Proc. Natl. Acad. Sci. U.S.A.">
        <title>N-terminal acetylome analyses and functional insights of the N-terminal acetyltransferase NatB.</title>
        <authorList>
            <person name="Van Damme P."/>
            <person name="Lasa M."/>
            <person name="Polevoda B."/>
            <person name="Gazquez C."/>
            <person name="Elosegui-Artola A."/>
            <person name="Kim D.S."/>
            <person name="De Juan-Pardo E."/>
            <person name="Demeyer K."/>
            <person name="Hole K."/>
            <person name="Larrea E."/>
            <person name="Timmerman E."/>
            <person name="Prieto J."/>
            <person name="Arnesen T."/>
            <person name="Sherman F."/>
            <person name="Gevaert K."/>
            <person name="Aldabe R."/>
        </authorList>
    </citation>
    <scope>ACETYLATION [LARGE SCALE ANALYSIS] AT SER-2</scope>
    <scope>CLEAVAGE OF INITIATOR METHIONINE [LARGE SCALE ANALYSIS]</scope>
    <scope>IDENTIFICATION BY MASS SPECTROMETRY [LARGE SCALE ANALYSIS]</scope>
</reference>
<reference key="11">
    <citation type="journal article" date="2013" name="J. Proteome Res.">
        <title>Toward a comprehensive characterization of a human cancer cell phosphoproteome.</title>
        <authorList>
            <person name="Zhou H."/>
            <person name="Di Palma S."/>
            <person name="Preisinger C."/>
            <person name="Peng M."/>
            <person name="Polat A.N."/>
            <person name="Heck A.J."/>
            <person name="Mohammed S."/>
        </authorList>
    </citation>
    <scope>PHOSPHORYLATION [LARGE SCALE ANALYSIS] AT SER-238 AND SER-308</scope>
    <scope>IDENTIFICATION BY MASS SPECTROMETRY [LARGE SCALE ANALYSIS]</scope>
    <source>
        <tissue>Erythroleukemia</tissue>
    </source>
</reference>
<reference key="12">
    <citation type="journal article" date="2014" name="Hum. Mol. Genet.">
        <title>The palmitoyl acyltransferase HIP14 shares a high proportion of interactors with huntingtin: implications for a role in the pathogenesis of Huntington's disease.</title>
        <authorList>
            <person name="Butland S.L."/>
            <person name="Sanders S.S."/>
            <person name="Schmidt M.E."/>
            <person name="Riechers S.P."/>
            <person name="Lin D.T."/>
            <person name="Martin D.D."/>
            <person name="Vaid K."/>
            <person name="Graham R.K."/>
            <person name="Singaraja R.R."/>
            <person name="Wanker E.E."/>
            <person name="Conibear E."/>
            <person name="Hayden M.R."/>
        </authorList>
    </citation>
    <scope>INTERACTION WITH ZDHHC17</scope>
</reference>
<reference key="13">
    <citation type="journal article" date="2014" name="Mol. Cell. Proteomics">
        <title>Immunoaffinity enrichment and mass spectrometry analysis of protein methylation.</title>
        <authorList>
            <person name="Guo A."/>
            <person name="Gu H."/>
            <person name="Zhou J."/>
            <person name="Mulhern D."/>
            <person name="Wang Y."/>
            <person name="Lee K.A."/>
            <person name="Yang V."/>
            <person name="Aguiar M."/>
            <person name="Kornhauser J."/>
            <person name="Jia X."/>
            <person name="Ren J."/>
            <person name="Beausoleil S.A."/>
            <person name="Silva J.C."/>
            <person name="Vemulapalli V."/>
            <person name="Bedford M.T."/>
            <person name="Comb M.J."/>
        </authorList>
    </citation>
    <scope>METHYLATION [LARGE SCALE ANALYSIS] AT LYS-224</scope>
    <scope>IDENTIFICATION BY MASS SPECTROMETRY [LARGE SCALE ANALYSIS]</scope>
    <source>
        <tissue>Colon carcinoma</tissue>
    </source>
</reference>
<reference key="14">
    <citation type="journal article" date="2009" name="J. Med. Genet.">
        <title>SPRED1 mutations (Legius syndrome): another clinically useful genotype for dissecting the neurofibromatosis type 1 phenotype.</title>
        <authorList>
            <person name="Spurlock G."/>
            <person name="Bennett E."/>
            <person name="Chuzhanova N."/>
            <person name="Thomas N."/>
            <person name="Jim H.P."/>
            <person name="Side L."/>
            <person name="Davies S."/>
            <person name="Haan E."/>
            <person name="Kerr B."/>
            <person name="Huson S.M."/>
            <person name="Upadhyaya M."/>
        </authorList>
    </citation>
    <scope>VARIANT LGSS ASP-44</scope>
</reference>
<reference key="15">
    <citation type="journal article" date="2010" name="Hum. Genet.">
        <title>Novel human pathological mutations. Gene symbol: SPRED1. Disease: Legius syndrome.</title>
        <authorList>
            <person name="Jim H.P."/>
            <person name="Upadhyaya M."/>
        </authorList>
    </citation>
    <scope>VARIANT LGSS ASP-44</scope>
</reference>
<reference key="16">
    <citation type="journal article" date="2011" name="Hum. Mutat.">
        <title>Legius syndrome in fourteen families.</title>
        <authorList>
            <person name="Denayer E."/>
            <person name="Chmara M."/>
            <person name="Brems H."/>
            <person name="Kievit A.M."/>
            <person name="van Bever Y."/>
            <person name="Van den Ouweland A.M."/>
            <person name="Van Minkelen R."/>
            <person name="de Goede-Bolder A."/>
            <person name="Oostenbrink R."/>
            <person name="Lakeman P."/>
            <person name="Beert E."/>
            <person name="Ishizaki T."/>
            <person name="Mori T."/>
            <person name="Keymolen K."/>
            <person name="Van den Ende J."/>
            <person name="Mangold E."/>
            <person name="Peltonen S."/>
            <person name="Brice G."/>
            <person name="Rankin J."/>
            <person name="Van Spaendonck-Zwarts K.Y."/>
            <person name="Yoshimura A."/>
            <person name="Legius E."/>
        </authorList>
    </citation>
    <scope>VARIANT LGSS CYS-31</scope>
</reference>